<protein>
    <recommendedName>
        <fullName>Heterogeneous nuclear ribonucleoprotein A1</fullName>
        <shortName>hnRNP A1</shortName>
    </recommendedName>
    <alternativeName>
        <fullName>Helix-destabilizing protein</fullName>
    </alternativeName>
    <alternativeName>
        <fullName>Single-strand RNA-binding protein</fullName>
    </alternativeName>
    <alternativeName>
        <fullName>hnRNP core protein A1</fullName>
    </alternativeName>
    <component>
        <recommendedName>
            <fullName>Heterogeneous nuclear ribonucleoprotein A1, N-terminally processed</fullName>
        </recommendedName>
    </component>
</protein>
<sequence>MSKSESPKEPEQLRKLFIGGLSFETTDESLRSHFEQWGTLTDCVVMRDPNTKRSRGFGFVTYATVEEVDAAMNARPHKVDGRVVEPKRAVSREDSQRPGAHLTVKKIFVGGIKEDTEEHHLRDYFEQYGKIEVIEIMTDRGSGKKRGFAFVTFDDHDSVDKIVIQKYHTVNGHNCEVRKALSKQEMASASSSQRGRSGSGNFGGGRGGGFGGNDNFGRGGNFSGRGGFGGSRGGGGYGGSGDGYNGFGNDGGYGGGGPGYSGGSRGYGSGGQGYGNQGSGYGGSGSYDSYNNGGGGGFGGGSGSNFGGGGSYNDFGNYNNQSSNFGPMKGGNFGGRSSGPYGGGGQYFAKPRNQGGYGGSSSSSSYGSGRRF</sequence>
<proteinExistence type="evidence at protein level"/>
<comment type="function">
    <text evidence="11 12 18 20">Involved in the packaging of pre-mRNA into hnRNP particles, transport of poly(A) mRNA from the nucleus to the cytoplasm and modulation of splice site selection (PubMed:17371836). Plays a role in the splicing of pyruvate kinase PKM by binding repressively to sequences flanking PKM exon 9, inhibiting exon 9 inclusion and resulting in exon 10 inclusion and production of the PKM M2 isoform (PubMed:20010808). Binds to the IRES and thereby inhibits the translation of the apoptosis protease activating factor APAF1 (PubMed:31498791). May bind to specific miRNA hairpins (PubMed:28431233).</text>
</comment>
<comment type="function">
    <text evidence="9">(Microbial infection) May play a role in HCV RNA replication.</text>
</comment>
<comment type="function">
    <text evidence="9">(Microbial infection) Cleavage by Enterovirus 71 protease 3C results in increased translation of apoptosis protease activating factor APAF1, leading to apoptosis.</text>
</comment>
<comment type="subunit">
    <text evidence="6 9 10 11 14 15 16 19">Identified in the spliceosome C complex (PubMed:11991638). Identified in a IGF2BP1-dependent mRNP granule complex containing untranslated mRNAs (PubMed:17289661). Interacts with SEPT6 (PubMed:17229681). Interacts with C9orf72 (PubMed:24549040). Interacts with KHDRBS1 (PubMed:17371836). Interacts with UBQLN2 (PubMed:25616961). Interacts with PPIA/CYPA (PubMed:25678563). Interacts (via the RGG-box) with the HOXB-AS3 peptide; the interaction inhibits binding of HNRNPA1 to the intronic sequences flanking exon 9 of the PKM gene, preventing inclusion of exon 9 and promoting inclusion of exon 10 which suppresses formation of the PKM M2 isoform and promotes production of the M1 isoform (PubMed:28985503).</text>
</comment>
<comment type="subunit">
    <text evidence="9">(Microbial infection) Interacts with HCV NS5B and with the 5'-UTR and 3'-UTR of HCV RNA.</text>
</comment>
<comment type="subunit">
    <text evidence="30">(Microbial infection) May interact with SARS-CoV Nucleoprotein.</text>
</comment>
<comment type="interaction">
    <interactant intactId="EBI-352662">
        <id>P09651</id>
    </interactant>
    <interactant intactId="EBI-357942">
        <id>Q9NR30</id>
        <label>DDX21</label>
    </interactant>
    <organismsDiffer>false</organismsDiffer>
    <experiments>2</experiments>
</comment>
<comment type="interaction">
    <interactant intactId="EBI-352662">
        <id>P09651</id>
    </interactant>
    <interactant intactId="EBI-2556580">
        <id>Q32P51</id>
        <label>HNRNPA1L2</label>
    </interactant>
    <organismsDiffer>false</organismsDiffer>
    <experiments>2</experiments>
</comment>
<comment type="interaction">
    <interactant intactId="EBI-352662">
        <id>P09651</id>
    </interactant>
    <interactant intactId="EBI-299649">
        <id>P22626</id>
        <label>HNRNPA2B1</label>
    </interactant>
    <organismsDiffer>false</organismsDiffer>
    <experiments>3</experiments>
</comment>
<comment type="interaction">
    <interactant intactId="EBI-352662">
        <id>P09651</id>
    </interactant>
    <interactant intactId="EBI-1050760">
        <id>P51991</id>
        <label>HNRNPA3</label>
    </interactant>
    <organismsDiffer>false</organismsDiffer>
    <experiments>2</experiments>
</comment>
<comment type="interaction">
    <interactant intactId="EBI-352662">
        <id>P09651</id>
    </interactant>
    <interactant intactId="EBI-357966">
        <id>P07910</id>
        <label>HNRNPC</label>
    </interactant>
    <organismsDiffer>false</organismsDiffer>
    <experiments>5</experiments>
</comment>
<comment type="interaction">
    <interactant intactId="EBI-352662">
        <id>P09651</id>
    </interactant>
    <interactant intactId="EBI-711437">
        <id>P31942</id>
        <label>HNRNPH3</label>
    </interactant>
    <organismsDiffer>false</organismsDiffer>
    <experiments>3</experiments>
</comment>
<comment type="interaction">
    <interactant intactId="EBI-352662">
        <id>P09651</id>
    </interactant>
    <interactant intactId="EBI-1364">
        <id>Q07666</id>
        <label>KHDRBS1</label>
    </interactant>
    <organismsDiffer>false</organismsDiffer>
    <experiments>10</experiments>
</comment>
<comment type="interaction">
    <interactant intactId="EBI-352662">
        <id>P09651</id>
    </interactant>
    <interactant intactId="EBI-2512147">
        <id>Q8IUH3</id>
        <label>RBM45</label>
    </interactant>
    <organismsDiffer>false</organismsDiffer>
    <experiments>6</experiments>
</comment>
<comment type="interaction">
    <interactant intactId="EBI-352662">
        <id>P09651</id>
    </interactant>
    <interactant intactId="EBI-745901">
        <id>Q14141</id>
        <label>SEPTIN6</label>
    </interactant>
    <organismsDiffer>false</organismsDiffer>
    <experiments>3</experiments>
</comment>
<comment type="interaction">
    <interactant intactId="EBI-352662">
        <id>P09651</id>
    </interactant>
    <interactant intactId="EBI-947187">
        <id>Q9UHD9</id>
        <label>UBQLN2</label>
    </interactant>
    <organismsDiffer>false</organismsDiffer>
    <experiments>2</experiments>
</comment>
<comment type="interaction">
    <interactant intactId="EBI-352662">
        <id>P09651</id>
    </interactant>
    <interactant intactId="EBI-6904388">
        <id>PRO_0000037577</id>
        <dbReference type="UniProtKB" id="P27958"/>
    </interactant>
    <organismsDiffer>true</organismsDiffer>
    <experiments>4</experiments>
</comment>
<comment type="interaction">
    <interactant intactId="EBI-352677">
        <id>P09651-2</id>
    </interactant>
    <interactant intactId="EBI-352677">
        <id>P09651-2</id>
        <label>HNRNPA1</label>
    </interactant>
    <organismsDiffer>false</organismsDiffer>
    <experiments>5</experiments>
</comment>
<comment type="interaction">
    <interactant intactId="EBI-352677">
        <id>P09651-2</id>
    </interactant>
    <interactant intactId="EBI-750973">
        <id>O00233</id>
        <label>PSMD9</label>
    </interactant>
    <organismsDiffer>false</organismsDiffer>
    <experiments>5</experiments>
</comment>
<comment type="interaction">
    <interactant intactId="EBI-352677">
        <id>P09651-2</id>
    </interactant>
    <interactant intactId="EBI-286693">
        <id>Q92973</id>
        <label>TNPO1</label>
    </interactant>
    <organismsDiffer>false</organismsDiffer>
    <experiments>2</experiments>
</comment>
<comment type="interaction">
    <interactant intactId="EBI-352677">
        <id>P09651-2</id>
    </interactant>
    <interactant intactId="EBI-947187">
        <id>Q9UHD9</id>
        <label>UBQLN2</label>
    </interactant>
    <organismsDiffer>false</organismsDiffer>
    <experiments>4</experiments>
</comment>
<comment type="subcellular location">
    <subcellularLocation>
        <location evidence="10 17">Nucleus</location>
    </subcellularLocation>
    <subcellularLocation>
        <location evidence="10">Cytoplasm</location>
    </subcellularLocation>
    <text evidence="10 17">Localized in cytoplasmic mRNP granules containing untranslated mRNAs. Shuttles continuously between the nucleus and the cytoplasm along with mRNA. Component of ribonucleosomes (PubMed:17289661).</text>
</comment>
<comment type="subcellular location">
    <subcellularLocation>
        <location evidence="9">Cytoplasm</location>
    </subcellularLocation>
    <text evidence="9">(Microbial infection) In the course of viral infection, colocalizes with HCV NS5B at speckles in the cytoplasm in a HCV-replication dependent manner.</text>
</comment>
<comment type="subcellular location">
    <subcellularLocation>
        <location evidence="21">Nucleus</location>
    </subcellularLocation>
    <text evidence="21">(Microbial infection) SARS coronavirus-2/SARS-CoV-2 ORF6 protein increases accumulation to the nucleus.</text>
</comment>
<comment type="alternative products">
    <event type="alternative splicing"/>
    <isoform>
        <id>P09651-1</id>
        <name>A1-B</name>
        <sequence type="displayed"/>
    </isoform>
    <isoform>
        <id>P09651-2</id>
        <name>A1-A</name>
        <sequence type="described" ref="VSP_005824"/>
    </isoform>
    <isoform>
        <id>P09651-3</id>
        <name>2</name>
        <sequence type="described" ref="VSP_034076"/>
    </isoform>
</comment>
<comment type="PTM">
    <text>Arg-194, Arg-206 and Arg-225 are dimethylated, probably to asymmetric dimethylarginine.</text>
</comment>
<comment type="PTM">
    <text evidence="7">Sumoylated.</text>
</comment>
<comment type="disease" evidence="13 15">
    <disease id="DI-03882">
        <name>Inclusion body myopathy with early-onset Paget disease with or without frontotemporal dementia 3</name>
        <acronym>IBMPFD3</acronym>
        <description>An autosomal dominant disease characterized by disabling muscle weakness clinically resembling to limb girdle muscular dystrophy, osteolytic bone lesions consistent with Paget disease, and premature frontotemporal dementia. Clinical features show incomplete penetrance.</description>
        <dbReference type="MIM" id="615424"/>
    </disease>
    <text>The disease is caused by variants affecting the gene represented in this entry.</text>
</comment>
<comment type="disease" evidence="13 17">
    <disease id="DI-03881">
        <name>Amyotrophic lateral sclerosis 20</name>
        <acronym>ALS20</acronym>
        <description>A neurodegenerative disorder affecting upper motor neurons in the brain and lower motor neurons in the brain stem and spinal cord, resulting in fatal paralysis. Sensory abnormalities are absent. The pathologic hallmarks of the disease include pallor of the corticospinal tract due to loss of motor neurons, presence of ubiquitin-positive inclusions within surviving motor neurons, and deposition of pathologic aggregates. The etiology of amyotrophic lateral sclerosis is likely to be multifactorial, involving both genetic and environmental factors. The disease is inherited in 5-10% of the cases.</description>
        <dbReference type="MIM" id="615426"/>
    </disease>
    <text>The disease is caused by variants affecting the gene represented in this entry.</text>
</comment>
<comment type="disease" evidence="22">
    <disease id="DI-06754">
        <name>Myopathy, distal, 3</name>
        <acronym>MPD3</acronym>
        <description>An autosomal dominant skeletal muscle disorder characterized by adult onset of slowly progressive distal muscular weakness and atrophy affecting the upper and lower limbs, leading to difficulties using the hands and walking difficulties. Proximal muscle involvement may occur later in the disease, but patients typically remain ambulatory. Muscle biopsy shows myopathic changes with rimmed vacuoles.</description>
        <dbReference type="MIM" id="610099"/>
    </disease>
    <text>The disease may be caused by variants affecting the gene represented in this entry.</text>
</comment>
<comment type="miscellaneous">
    <molecule>Isoform A1-A</molecule>
    <text evidence="29">Is twenty times more abundant than isoform A1-B.</text>
</comment>
<keyword id="KW-0002">3D-structure</keyword>
<keyword id="KW-0007">Acetylation</keyword>
<keyword id="KW-0025">Alternative splicing</keyword>
<keyword id="KW-0036">Amyotrophic lateral sclerosis</keyword>
<keyword id="KW-0963">Cytoplasm</keyword>
<keyword id="KW-0903">Direct protein sequencing</keyword>
<keyword id="KW-0225">Disease variant</keyword>
<keyword id="KW-0945">Host-virus interaction</keyword>
<keyword id="KW-1017">Isopeptide bond</keyword>
<keyword id="KW-0488">Methylation</keyword>
<keyword id="KW-0507">mRNA processing</keyword>
<keyword id="KW-0508">mRNA splicing</keyword>
<keyword id="KW-0509">mRNA transport</keyword>
<keyword id="KW-0523">Neurodegeneration</keyword>
<keyword id="KW-0539">Nucleus</keyword>
<keyword id="KW-0597">Phosphoprotein</keyword>
<keyword id="KW-1267">Proteomics identification</keyword>
<keyword id="KW-1185">Reference proteome</keyword>
<keyword id="KW-0677">Repeat</keyword>
<keyword id="KW-0687">Ribonucleoprotein</keyword>
<keyword id="KW-0694">RNA-binding</keyword>
<keyword id="KW-0747">Spliceosome</keyword>
<keyword id="KW-0813">Transport</keyword>
<keyword id="KW-0832">Ubl conjugation</keyword>
<reference key="1">
    <citation type="journal article" date="1989" name="J. Mol. Biol.">
        <title>Isolation of an active gene encoding human hnRNP protein A1. Evidence for alternative splicing.</title>
        <authorList>
            <person name="Biamonti G."/>
            <person name="Buvoli M."/>
            <person name="Bassi M.T."/>
            <person name="Morandi C."/>
            <person name="Cobianchi F."/>
            <person name="Riva S."/>
        </authorList>
    </citation>
    <scope>NUCLEOTIDE SEQUENCE [GENOMIC DNA] (ISOFORM A1-A)</scope>
    <source>
        <tissue>Liver</tissue>
    </source>
</reference>
<reference key="2">
    <citation type="journal article" date="1988" name="Nucleic Acids Res.">
        <title>cDNA cloning of human hnRNP protein A1 reveals the existence of multiple mRNA isoforms.</title>
        <authorList>
            <person name="Buvoli M."/>
            <person name="Biamonti G."/>
            <person name="Ghetti A."/>
            <person name="Riva S."/>
            <person name="Bassi M.T."/>
            <person name="Horandi C."/>
        </authorList>
    </citation>
    <scope>NUCLEOTIDE SEQUENCE [MRNA] (ISOFORM A1-A)</scope>
    <source>
        <tissue>Fibroblast</tissue>
    </source>
</reference>
<reference key="3">
    <citation type="submission" date="1994-06" db="EMBL/GenBank/DDBJ databases">
        <authorList>
            <person name="Knudsen S.M."/>
            <person name="Leffers H."/>
        </authorList>
    </citation>
    <scope>NUCLEOTIDE SEQUENCE [MRNA] (ISOFORM A1-A)</scope>
    <source>
        <tissue>Lung</tissue>
    </source>
</reference>
<reference key="4">
    <citation type="journal article" date="2004" name="Nat. Genet.">
        <title>Complete sequencing and characterization of 21,243 full-length human cDNAs.</title>
        <authorList>
            <person name="Ota T."/>
            <person name="Suzuki Y."/>
            <person name="Nishikawa T."/>
            <person name="Otsuki T."/>
            <person name="Sugiyama T."/>
            <person name="Irie R."/>
            <person name="Wakamatsu A."/>
            <person name="Hayashi K."/>
            <person name="Sato H."/>
            <person name="Nagai K."/>
            <person name="Kimura K."/>
            <person name="Makita H."/>
            <person name="Sekine M."/>
            <person name="Obayashi M."/>
            <person name="Nishi T."/>
            <person name="Shibahara T."/>
            <person name="Tanaka T."/>
            <person name="Ishii S."/>
            <person name="Yamamoto J."/>
            <person name="Saito K."/>
            <person name="Kawai Y."/>
            <person name="Isono Y."/>
            <person name="Nakamura Y."/>
            <person name="Nagahari K."/>
            <person name="Murakami K."/>
            <person name="Yasuda T."/>
            <person name="Iwayanagi T."/>
            <person name="Wagatsuma M."/>
            <person name="Shiratori A."/>
            <person name="Sudo H."/>
            <person name="Hosoiri T."/>
            <person name="Kaku Y."/>
            <person name="Kodaira H."/>
            <person name="Kondo H."/>
            <person name="Sugawara M."/>
            <person name="Takahashi M."/>
            <person name="Kanda K."/>
            <person name="Yokoi T."/>
            <person name="Furuya T."/>
            <person name="Kikkawa E."/>
            <person name="Omura Y."/>
            <person name="Abe K."/>
            <person name="Kamihara K."/>
            <person name="Katsuta N."/>
            <person name="Sato K."/>
            <person name="Tanikawa M."/>
            <person name="Yamazaki M."/>
            <person name="Ninomiya K."/>
            <person name="Ishibashi T."/>
            <person name="Yamashita H."/>
            <person name="Murakawa K."/>
            <person name="Fujimori K."/>
            <person name="Tanai H."/>
            <person name="Kimata M."/>
            <person name="Watanabe M."/>
            <person name="Hiraoka S."/>
            <person name="Chiba Y."/>
            <person name="Ishida S."/>
            <person name="Ono Y."/>
            <person name="Takiguchi S."/>
            <person name="Watanabe S."/>
            <person name="Yosida M."/>
            <person name="Hotuta T."/>
            <person name="Kusano J."/>
            <person name="Kanehori K."/>
            <person name="Takahashi-Fujii A."/>
            <person name="Hara H."/>
            <person name="Tanase T.-O."/>
            <person name="Nomura Y."/>
            <person name="Togiya S."/>
            <person name="Komai F."/>
            <person name="Hara R."/>
            <person name="Takeuchi K."/>
            <person name="Arita M."/>
            <person name="Imose N."/>
            <person name="Musashino K."/>
            <person name="Yuuki H."/>
            <person name="Oshima A."/>
            <person name="Sasaki N."/>
            <person name="Aotsuka S."/>
            <person name="Yoshikawa Y."/>
            <person name="Matsunawa H."/>
            <person name="Ichihara T."/>
            <person name="Shiohata N."/>
            <person name="Sano S."/>
            <person name="Moriya S."/>
            <person name="Momiyama H."/>
            <person name="Satoh N."/>
            <person name="Takami S."/>
            <person name="Terashima Y."/>
            <person name="Suzuki O."/>
            <person name="Nakagawa S."/>
            <person name="Senoh A."/>
            <person name="Mizoguchi H."/>
            <person name="Goto Y."/>
            <person name="Shimizu F."/>
            <person name="Wakebe H."/>
            <person name="Hishigaki H."/>
            <person name="Watanabe T."/>
            <person name="Sugiyama A."/>
            <person name="Takemoto M."/>
            <person name="Kawakami B."/>
            <person name="Yamazaki M."/>
            <person name="Watanabe K."/>
            <person name="Kumagai A."/>
            <person name="Itakura S."/>
            <person name="Fukuzumi Y."/>
            <person name="Fujimori Y."/>
            <person name="Komiyama M."/>
            <person name="Tashiro H."/>
            <person name="Tanigami A."/>
            <person name="Fujiwara T."/>
            <person name="Ono T."/>
            <person name="Yamada K."/>
            <person name="Fujii Y."/>
            <person name="Ozaki K."/>
            <person name="Hirao M."/>
            <person name="Ohmori Y."/>
            <person name="Kawabata A."/>
            <person name="Hikiji T."/>
            <person name="Kobatake N."/>
            <person name="Inagaki H."/>
            <person name="Ikema Y."/>
            <person name="Okamoto S."/>
            <person name="Okitani R."/>
            <person name="Kawakami T."/>
            <person name="Noguchi S."/>
            <person name="Itoh T."/>
            <person name="Shigeta K."/>
            <person name="Senba T."/>
            <person name="Matsumura K."/>
            <person name="Nakajima Y."/>
            <person name="Mizuno T."/>
            <person name="Morinaga M."/>
            <person name="Sasaki M."/>
            <person name="Togashi T."/>
            <person name="Oyama M."/>
            <person name="Hata H."/>
            <person name="Watanabe M."/>
            <person name="Komatsu T."/>
            <person name="Mizushima-Sugano J."/>
            <person name="Satoh T."/>
            <person name="Shirai Y."/>
            <person name="Takahashi Y."/>
            <person name="Nakagawa K."/>
            <person name="Okumura K."/>
            <person name="Nagase T."/>
            <person name="Nomura N."/>
            <person name="Kikuchi H."/>
            <person name="Masuho Y."/>
            <person name="Yamashita R."/>
            <person name="Nakai K."/>
            <person name="Yada T."/>
            <person name="Nakamura Y."/>
            <person name="Ohara O."/>
            <person name="Isogai T."/>
            <person name="Sugano S."/>
        </authorList>
    </citation>
    <scope>NUCLEOTIDE SEQUENCE [LARGE SCALE MRNA] (ISOFORM A1-A)</scope>
</reference>
<reference key="5">
    <citation type="journal article" date="2006" name="Nature">
        <title>The finished DNA sequence of human chromosome 12.</title>
        <authorList>
            <person name="Scherer S.E."/>
            <person name="Muzny D.M."/>
            <person name="Buhay C.J."/>
            <person name="Chen R."/>
            <person name="Cree A."/>
            <person name="Ding Y."/>
            <person name="Dugan-Rocha S."/>
            <person name="Gill R."/>
            <person name="Gunaratne P."/>
            <person name="Harris R.A."/>
            <person name="Hawes A.C."/>
            <person name="Hernandez J."/>
            <person name="Hodgson A.V."/>
            <person name="Hume J."/>
            <person name="Jackson A."/>
            <person name="Khan Z.M."/>
            <person name="Kovar-Smith C."/>
            <person name="Lewis L.R."/>
            <person name="Lozado R.J."/>
            <person name="Metzker M.L."/>
            <person name="Milosavljevic A."/>
            <person name="Miner G.R."/>
            <person name="Montgomery K.T."/>
            <person name="Morgan M.B."/>
            <person name="Nazareth L.V."/>
            <person name="Scott G."/>
            <person name="Sodergren E."/>
            <person name="Song X.-Z."/>
            <person name="Steffen D."/>
            <person name="Lovering R.C."/>
            <person name="Wheeler D.A."/>
            <person name="Worley K.C."/>
            <person name="Yuan Y."/>
            <person name="Zhang Z."/>
            <person name="Adams C.Q."/>
            <person name="Ansari-Lari M.A."/>
            <person name="Ayele M."/>
            <person name="Brown M.J."/>
            <person name="Chen G."/>
            <person name="Chen Z."/>
            <person name="Clerc-Blankenburg K.P."/>
            <person name="Davis C."/>
            <person name="Delgado O."/>
            <person name="Dinh H.H."/>
            <person name="Draper H."/>
            <person name="Gonzalez-Garay M.L."/>
            <person name="Havlak P."/>
            <person name="Jackson L.R."/>
            <person name="Jacob L.S."/>
            <person name="Kelly S.H."/>
            <person name="Li L."/>
            <person name="Li Z."/>
            <person name="Liu J."/>
            <person name="Liu W."/>
            <person name="Lu J."/>
            <person name="Maheshwari M."/>
            <person name="Nguyen B.-V."/>
            <person name="Okwuonu G.O."/>
            <person name="Pasternak S."/>
            <person name="Perez L.M."/>
            <person name="Plopper F.J.H."/>
            <person name="Santibanez J."/>
            <person name="Shen H."/>
            <person name="Tabor P.E."/>
            <person name="Verduzco D."/>
            <person name="Waldron L."/>
            <person name="Wang Q."/>
            <person name="Williams G.A."/>
            <person name="Zhang J."/>
            <person name="Zhou J."/>
            <person name="Allen C.C."/>
            <person name="Amin A.G."/>
            <person name="Anyalebechi V."/>
            <person name="Bailey M."/>
            <person name="Barbaria J.A."/>
            <person name="Bimage K.E."/>
            <person name="Bryant N.P."/>
            <person name="Burch P.E."/>
            <person name="Burkett C.E."/>
            <person name="Burrell K.L."/>
            <person name="Calderon E."/>
            <person name="Cardenas V."/>
            <person name="Carter K."/>
            <person name="Casias K."/>
            <person name="Cavazos I."/>
            <person name="Cavazos S.R."/>
            <person name="Ceasar H."/>
            <person name="Chacko J."/>
            <person name="Chan S.N."/>
            <person name="Chavez D."/>
            <person name="Christopoulos C."/>
            <person name="Chu J."/>
            <person name="Cockrell R."/>
            <person name="Cox C.D."/>
            <person name="Dang M."/>
            <person name="Dathorne S.R."/>
            <person name="David R."/>
            <person name="Davis C.M."/>
            <person name="Davy-Carroll L."/>
            <person name="Deshazo D.R."/>
            <person name="Donlin J.E."/>
            <person name="D'Souza L."/>
            <person name="Eaves K.A."/>
            <person name="Egan A."/>
            <person name="Emery-Cohen A.J."/>
            <person name="Escotto M."/>
            <person name="Flagg N."/>
            <person name="Forbes L.D."/>
            <person name="Gabisi A.M."/>
            <person name="Garza M."/>
            <person name="Hamilton C."/>
            <person name="Henderson N."/>
            <person name="Hernandez O."/>
            <person name="Hines S."/>
            <person name="Hogues M.E."/>
            <person name="Huang M."/>
            <person name="Idlebird D.G."/>
            <person name="Johnson R."/>
            <person name="Jolivet A."/>
            <person name="Jones S."/>
            <person name="Kagan R."/>
            <person name="King L.M."/>
            <person name="Leal B."/>
            <person name="Lebow H."/>
            <person name="Lee S."/>
            <person name="LeVan J.M."/>
            <person name="Lewis L.C."/>
            <person name="London P."/>
            <person name="Lorensuhewa L.M."/>
            <person name="Loulseged H."/>
            <person name="Lovett D.A."/>
            <person name="Lucier A."/>
            <person name="Lucier R.L."/>
            <person name="Ma J."/>
            <person name="Madu R.C."/>
            <person name="Mapua P."/>
            <person name="Martindale A.D."/>
            <person name="Martinez E."/>
            <person name="Massey E."/>
            <person name="Mawhiney S."/>
            <person name="Meador M.G."/>
            <person name="Mendez S."/>
            <person name="Mercado C."/>
            <person name="Mercado I.C."/>
            <person name="Merritt C.E."/>
            <person name="Miner Z.L."/>
            <person name="Minja E."/>
            <person name="Mitchell T."/>
            <person name="Mohabbat F."/>
            <person name="Mohabbat K."/>
            <person name="Montgomery B."/>
            <person name="Moore N."/>
            <person name="Morris S."/>
            <person name="Munidasa M."/>
            <person name="Ngo R.N."/>
            <person name="Nguyen N.B."/>
            <person name="Nickerson E."/>
            <person name="Nwaokelemeh O.O."/>
            <person name="Nwokenkwo S."/>
            <person name="Obregon M."/>
            <person name="Oguh M."/>
            <person name="Oragunye N."/>
            <person name="Oviedo R.J."/>
            <person name="Parish B.J."/>
            <person name="Parker D.N."/>
            <person name="Parrish J."/>
            <person name="Parks K.L."/>
            <person name="Paul H.A."/>
            <person name="Payton B.A."/>
            <person name="Perez A."/>
            <person name="Perrin W."/>
            <person name="Pickens A."/>
            <person name="Primus E.L."/>
            <person name="Pu L.-L."/>
            <person name="Puazo M."/>
            <person name="Quiles M.M."/>
            <person name="Quiroz J.B."/>
            <person name="Rabata D."/>
            <person name="Reeves K."/>
            <person name="Ruiz S.J."/>
            <person name="Shao H."/>
            <person name="Sisson I."/>
            <person name="Sonaike T."/>
            <person name="Sorelle R.P."/>
            <person name="Sutton A.E."/>
            <person name="Svatek A.F."/>
            <person name="Svetz L.A."/>
            <person name="Tamerisa K.S."/>
            <person name="Taylor T.R."/>
            <person name="Teague B."/>
            <person name="Thomas N."/>
            <person name="Thorn R.D."/>
            <person name="Trejos Z.Y."/>
            <person name="Trevino B.K."/>
            <person name="Ukegbu O.N."/>
            <person name="Urban J.B."/>
            <person name="Vasquez L.I."/>
            <person name="Vera V.A."/>
            <person name="Villasana D.M."/>
            <person name="Wang L."/>
            <person name="Ward-Moore S."/>
            <person name="Warren J.T."/>
            <person name="Wei X."/>
            <person name="White F."/>
            <person name="Williamson A.L."/>
            <person name="Wleczyk R."/>
            <person name="Wooden H.S."/>
            <person name="Wooden S.H."/>
            <person name="Yen J."/>
            <person name="Yoon L."/>
            <person name="Yoon V."/>
            <person name="Zorrilla S.E."/>
            <person name="Nelson D."/>
            <person name="Kucherlapati R."/>
            <person name="Weinstock G."/>
            <person name="Gibbs R.A."/>
        </authorList>
    </citation>
    <scope>NUCLEOTIDE SEQUENCE [LARGE SCALE GENOMIC DNA]</scope>
</reference>
<reference key="6">
    <citation type="submission" date="2005-07" db="EMBL/GenBank/DDBJ databases">
        <authorList>
            <person name="Mural R.J."/>
            <person name="Istrail S."/>
            <person name="Sutton G.G."/>
            <person name="Florea L."/>
            <person name="Halpern A.L."/>
            <person name="Mobarry C.M."/>
            <person name="Lippert R."/>
            <person name="Walenz B."/>
            <person name="Shatkay H."/>
            <person name="Dew I."/>
            <person name="Miller J.R."/>
            <person name="Flanigan M.J."/>
            <person name="Edwards N.J."/>
            <person name="Bolanos R."/>
            <person name="Fasulo D."/>
            <person name="Halldorsson B.V."/>
            <person name="Hannenhalli S."/>
            <person name="Turner R."/>
            <person name="Yooseph S."/>
            <person name="Lu F."/>
            <person name="Nusskern D.R."/>
            <person name="Shue B.C."/>
            <person name="Zheng X.H."/>
            <person name="Zhong F."/>
            <person name="Delcher A.L."/>
            <person name="Huson D.H."/>
            <person name="Kravitz S.A."/>
            <person name="Mouchard L."/>
            <person name="Reinert K."/>
            <person name="Remington K.A."/>
            <person name="Clark A.G."/>
            <person name="Waterman M.S."/>
            <person name="Eichler E.E."/>
            <person name="Adams M.D."/>
            <person name="Hunkapiller M.W."/>
            <person name="Myers E.W."/>
            <person name="Venter J.C."/>
        </authorList>
    </citation>
    <scope>NUCLEOTIDE SEQUENCE [LARGE SCALE GENOMIC DNA]</scope>
</reference>
<reference key="7">
    <citation type="journal article" date="2004" name="Genome Res.">
        <title>The status, quality, and expansion of the NIH full-length cDNA project: the Mammalian Gene Collection (MGC).</title>
        <authorList>
            <consortium name="The MGC Project Team"/>
        </authorList>
    </citation>
    <scope>NUCLEOTIDE SEQUENCE [LARGE SCALE MRNA] (ISOFORMS A1-A AND 2)</scope>
    <source>
        <tissue>Bone marrow</tissue>
        <tissue>Cervix</tissue>
        <tissue>Eye</tissue>
        <tissue>Kidney</tissue>
        <tissue>Liver</tissue>
        <tissue>Lung</tissue>
        <tissue>Lymph</tissue>
    </source>
</reference>
<reference key="8">
    <citation type="journal article" date="1986" name="EMBO J.">
        <title>Mammalian single-stranded DNA binding protein UP I is derived from the hnRNP core protein A1.</title>
        <authorList>
            <person name="Riva S."/>
            <person name="Morandi C."/>
            <person name="Tsoulfas P."/>
            <person name="Pandolfo M."/>
            <person name="Biamonti G."/>
            <person name="Merrill B."/>
            <person name="Williams K.R."/>
            <person name="Multhaup G."/>
            <person name="Beyreuther K."/>
            <person name="Werr H."/>
            <person name="Heinrich B."/>
            <person name="Schaefer K.P."/>
        </authorList>
    </citation>
    <scope>PARTIAL NUCLEOTIDE SEQUENCE [MRNA]</scope>
    <source>
        <tissue>Liver</tissue>
    </source>
</reference>
<reference key="9">
    <citation type="submission" date="2008-12" db="UniProtKB">
        <authorList>
            <person name="Bienvenut W.V."/>
            <person name="Calvo F."/>
            <person name="Lilla S."/>
            <person name="von Kriegsheim A."/>
            <person name="Lempens A."/>
            <person name="Kolch W."/>
        </authorList>
    </citation>
    <scope>PROTEIN SEQUENCE OF 2-47; 56-78; 93-140; 146-178; 197-232 AND 337-370</scope>
    <scope>CLEAVAGE OF INITIATOR METHIONINE</scope>
    <scope>ACETYLATION AT SER-2</scope>
    <scope>METHYLATION AT ARG-206 AND ARG-225</scope>
    <scope>IDENTIFICATION BY MASS SPECTROMETRY</scope>
    <source>
        <tissue>Cervix carcinoma</tissue>
        <tissue>Ovarian carcinoma</tissue>
    </source>
</reference>
<reference key="10">
    <citation type="submission" date="2008-12" db="UniProtKB">
        <authorList>
            <person name="Lubec G."/>
            <person name="Chen W.-Q."/>
            <person name="Sun Y."/>
        </authorList>
    </citation>
    <scope>PROTEIN SEQUENCE OF 15-47; 147-161 AND 353-370</scope>
    <scope>IDENTIFICATION BY MASS SPECTROMETRY</scope>
    <source>
        <tissue>Fetal brain cortex</tissue>
    </source>
</reference>
<reference key="11">
    <citation type="journal article" date="1990" name="EMBO J.">
        <title>Alternative splicing in the human gene for the core protein A1 generates another hnRNP protein.</title>
        <authorList>
            <person name="Buvoli M."/>
            <person name="Cobianchi F."/>
            <person name="Bestagno M.G."/>
            <person name="Mangiarotti A."/>
            <person name="Bassi M.T."/>
            <person name="Biamonti G."/>
            <person name="Riva S."/>
        </authorList>
    </citation>
    <scope>NUCLEOTIDE SEQUENCE OF 252-303 (ISOFORM A1-B)</scope>
</reference>
<reference key="12">
    <citation type="journal article" date="1995" name="J. Cell Biol.">
        <title>A nuclear localization domain in the hnRNP A1 protein.</title>
        <authorList>
            <person name="Siomi H."/>
            <person name="Dreyfuss G."/>
        </authorList>
    </citation>
    <scope>NUCLEAR LOCALIZATION SIGNAL</scope>
    <scope>MUTAGENESIS OF GLY-326; PRO-327 AND 334-GLY-GLY-335</scope>
</reference>
<reference key="13">
    <citation type="journal article" date="1995" name="Cell">
        <title>A nuclear export signal in hnRNP A1: a signal-mediated, temperature-dependent nuclear protein export pathway.</title>
        <authorList>
            <person name="Michael W.M."/>
            <person name="Choi M."/>
            <person name="Dreyfuss G."/>
        </authorList>
    </citation>
    <scope>NUCLEAR LOCALIZATION SIGNAL</scope>
    <scope>NUCLEAR EXPORT</scope>
</reference>
<reference key="14">
    <citation type="journal article" date="1995" name="J. Cell Sci.">
        <title>Nucleo-cytoplasmic distribution of human hnRNP proteins: a search for the targeting domains in hnRNP A1.</title>
        <authorList>
            <person name="Weighardt F."/>
            <person name="Biamonti G."/>
            <person name="Riva S."/>
        </authorList>
    </citation>
    <scope>NUCLEAR LOCALIZATION SIGNAL</scope>
</reference>
<reference key="15">
    <citation type="journal article" date="2002" name="RNA">
        <title>Purification and characterization of native spliceosomes suitable for three-dimensional structural analysis.</title>
        <authorList>
            <person name="Jurica M.S."/>
            <person name="Licklider L.J."/>
            <person name="Gygi S.P."/>
            <person name="Grigorieff N."/>
            <person name="Moore M.J."/>
        </authorList>
    </citation>
    <scope>IDENTIFICATION BY MASS SPECTROMETRY</scope>
    <scope>IDENTIFICATION IN THE SPLICEOSOMAL C COMPLEX</scope>
</reference>
<reference key="16">
    <citation type="journal article" date="2004" name="Nat. Methods">
        <title>Identifying and quantifying in vivo methylation sites by heavy methyl SILAC.</title>
        <authorList>
            <person name="Ong S.E."/>
            <person name="Mittler G."/>
            <person name="Mann M."/>
        </authorList>
    </citation>
    <scope>METHYLATION [LARGE SCALE ANALYSIS] AT ARG-194; ARG-206 AND ARG-225</scope>
    <scope>IDENTIFICATION BY MASS SPECTROMETRY [LARGE SCALE ANALYSIS]</scope>
    <source>
        <tissue>Cervix carcinoma</tissue>
    </source>
</reference>
<reference key="17">
    <citation type="journal article" date="2004" name="Proc. Natl. Acad. Sci. U.S.A.">
        <title>Sumoylation of heterogeneous nuclear ribonucleoproteins, zinc finger proteins, and nuclear pore complex proteins: a proteomic analysis.</title>
        <authorList>
            <person name="Li T."/>
            <person name="Evdokimov E."/>
            <person name="Shen R.F."/>
            <person name="Chao C.C."/>
            <person name="Tekle E."/>
            <person name="Wang T."/>
            <person name="Stadtman E.R."/>
            <person name="Yang D.C."/>
            <person name="Chock P.B."/>
        </authorList>
    </citation>
    <scope>SUMOYLATION AT LYS-113</scope>
</reference>
<reference key="18">
    <citation type="journal article" date="2005" name="Immunity">
        <title>The Mnks are novel components in the control of TNF alpha biosynthesis and phosphorylate and regulate hnRNP A1.</title>
        <authorList>
            <person name="Buxade M."/>
            <person name="Parra J.L."/>
            <person name="Rousseau S."/>
            <person name="Shpiro N."/>
            <person name="Marquez R."/>
            <person name="Morrice N."/>
            <person name="Bain J."/>
            <person name="Espel E."/>
            <person name="Proud C.G."/>
        </authorList>
    </citation>
    <scope>PHOSPHORYLATION AT SER-192; SER-362; SER-363 AND SER-364 BY MKNK2</scope>
</reference>
<reference key="19">
    <citation type="journal article" date="2005" name="FEBS Lett.">
        <title>The nucleocapsid protein of SARS coronavirus has a high binding affinity to the human cellular heterogeneous nuclear ribonucleoprotein A1.</title>
        <authorList>
            <person name="Luo H."/>
            <person name="Chen Q."/>
            <person name="Chen J."/>
            <person name="Chen K."/>
            <person name="Shen X."/>
            <person name="Jiang H."/>
        </authorList>
    </citation>
    <scope>INTERACTION WITH SARS-COV NUCLEOPROTEIN (MICROBIAL INFECTION)</scope>
</reference>
<reference key="20">
    <citation type="journal article" date="2006" name="Cell">
        <title>Global, in vivo, and site-specific phosphorylation dynamics in signaling networks.</title>
        <authorList>
            <person name="Olsen J.V."/>
            <person name="Blagoev B."/>
            <person name="Gnad F."/>
            <person name="Macek B."/>
            <person name="Kumar C."/>
            <person name="Mortensen P."/>
            <person name="Mann M."/>
        </authorList>
    </citation>
    <scope>IDENTIFICATION BY MASS SPECTROMETRY [LARGE SCALE ANALYSIS]</scope>
    <source>
        <tissue>Cervix carcinoma</tissue>
    </source>
</reference>
<reference key="21">
    <citation type="journal article" date="2007" name="J. Cell Biol.">
        <title>The RNA-binding protein Sam68 modulates the alternative splicing of Bcl-x.</title>
        <authorList>
            <person name="Paronetto M.P."/>
            <person name="Achsel T."/>
            <person name="Massiello A."/>
            <person name="Chalfant C.E."/>
            <person name="Sette C."/>
        </authorList>
    </citation>
    <scope>FUNCTION</scope>
    <scope>INTERACTION WITH KHDRBS1</scope>
</reference>
<reference key="22">
    <citation type="journal article" date="2007" name="J. Proteome Res.">
        <title>Improved titanium dioxide enrichment of phosphopeptides from HeLa cells and high confident phosphopeptide identification by cross-validation of MS/MS and MS/MS/MS spectra.</title>
        <authorList>
            <person name="Yu L.R."/>
            <person name="Zhu Z."/>
            <person name="Chan K.C."/>
            <person name="Issaq H.J."/>
            <person name="Dimitrov D.S."/>
            <person name="Veenstra T.D."/>
        </authorList>
    </citation>
    <scope>IDENTIFICATION BY MASS SPECTROMETRY [LARGE SCALE ANALYSIS]</scope>
    <source>
        <tissue>Cervix carcinoma</tissue>
    </source>
</reference>
<reference key="23">
    <citation type="journal article" date="2007" name="J. Virol.">
        <title>An RNA-binding protein, hnRNP A1, and a scaffold protein, septin 6, facilitate hepatitis C virus replication.</title>
        <authorList>
            <person name="Kim C.S."/>
            <person name="Seol S.K."/>
            <person name="Song O.-K."/>
            <person name="Park J.H."/>
            <person name="Jang S.K."/>
        </authorList>
    </citation>
    <scope>INTERACTION WITH SEPT6</scope>
    <scope>INTERACTION WITH HCV NS5B (MICROBIAL INFECTION)</scope>
    <scope>FUNCTION (MICROBIAL INFECTION)</scope>
    <scope>SUBCELLULAR LOCATION (MICROBIAL INFECTION)</scope>
</reference>
<reference key="24">
    <citation type="journal article" date="2007" name="Mol. Cell. Proteomics">
        <title>Molecular composition of IMP1 ribonucleoprotein granules.</title>
        <authorList>
            <person name="Joeson L."/>
            <person name="Vikesaa J."/>
            <person name="Krogh A."/>
            <person name="Nielsen L.K."/>
            <person name="Hansen T."/>
            <person name="Borup R."/>
            <person name="Johnsen A.H."/>
            <person name="Christiansen J."/>
            <person name="Nielsen F.C."/>
        </authorList>
    </citation>
    <scope>IDENTIFICATION IN A MRNP GRANULE COMPLEX</scope>
    <scope>IDENTIFICATION BY MASS SPECTROMETRY</scope>
    <scope>SUBCELLULAR LOCATION</scope>
</reference>
<reference key="25">
    <citation type="journal article" date="2008" name="J. Proteome Res.">
        <title>Phosphorylation analysis of primary human T lymphocytes using sequential IMAC and titanium oxide enrichment.</title>
        <authorList>
            <person name="Carrascal M."/>
            <person name="Ovelleiro D."/>
            <person name="Casas V."/>
            <person name="Gay M."/>
            <person name="Abian J."/>
        </authorList>
    </citation>
    <scope>IDENTIFICATION BY MASS SPECTROMETRY [LARGE SCALE ANALYSIS]</scope>
    <source>
        <tissue>T-cell</tissue>
    </source>
</reference>
<reference key="26">
    <citation type="journal article" date="2008" name="Proc. Natl. Acad. Sci. U.S.A.">
        <title>A quantitative atlas of mitotic phosphorylation.</title>
        <authorList>
            <person name="Dephoure N."/>
            <person name="Zhou C."/>
            <person name="Villen J."/>
            <person name="Beausoleil S.A."/>
            <person name="Bakalarski C.E."/>
            <person name="Elledge S.J."/>
            <person name="Gygi S.P."/>
        </authorList>
    </citation>
    <scope>PHOSPHORYLATION [LARGE SCALE ANALYSIS] AT SER-6 AND SER-368</scope>
    <scope>IDENTIFICATION BY MASS SPECTROMETRY [LARGE SCALE ANALYSIS]</scope>
    <source>
        <tissue>Cervix carcinoma</tissue>
    </source>
</reference>
<reference key="27">
    <citation type="journal article" date="2009" name="Anal. Chem.">
        <title>Lys-N and trypsin cover complementary parts of the phosphoproteome in a refined SCX-based approach.</title>
        <authorList>
            <person name="Gauci S."/>
            <person name="Helbig A.O."/>
            <person name="Slijper M."/>
            <person name="Krijgsveld J."/>
            <person name="Heck A.J."/>
            <person name="Mohammed S."/>
        </authorList>
    </citation>
    <scope>IDENTIFICATION BY MASS SPECTROMETRY [LARGE SCALE ANALYSIS]</scope>
</reference>
<reference key="28">
    <citation type="journal article" date="2009" name="Sci. Signal.">
        <title>Quantitative phosphoproteomic analysis of T cell receptor signaling reveals system-wide modulation of protein-protein interactions.</title>
        <authorList>
            <person name="Mayya V."/>
            <person name="Lundgren D.H."/>
            <person name="Hwang S.-I."/>
            <person name="Rezaul K."/>
            <person name="Wu L."/>
            <person name="Eng J.K."/>
            <person name="Rodionov V."/>
            <person name="Han D.K."/>
        </authorList>
    </citation>
    <scope>IDENTIFICATION BY MASS SPECTROMETRY [LARGE SCALE ANALYSIS]</scope>
    <source>
        <tissue>Leukemic T-cell</tissue>
    </source>
</reference>
<reference key="29">
    <citation type="journal article" date="2009" name="Science">
        <title>Lysine acetylation targets protein complexes and co-regulates major cellular functions.</title>
        <authorList>
            <person name="Choudhary C."/>
            <person name="Kumar C."/>
            <person name="Gnad F."/>
            <person name="Nielsen M.L."/>
            <person name="Rehman M."/>
            <person name="Walther T.C."/>
            <person name="Olsen J.V."/>
            <person name="Mann M."/>
        </authorList>
    </citation>
    <scope>ACETYLATION [LARGE SCALE ANALYSIS] AT LYS-3 AND LYS-350</scope>
    <scope>IDENTIFICATION BY MASS SPECTROMETRY [LARGE SCALE ANALYSIS]</scope>
</reference>
<reference key="30">
    <citation type="journal article" date="2010" name="Nature">
        <title>HnRNP proteins controlled by c-Myc deregulate pyruvate kinase mRNA splicing in cancer.</title>
        <authorList>
            <person name="David C.J."/>
            <person name="Chen M."/>
            <person name="Assanah M."/>
            <person name="Canoll P."/>
            <person name="Manley J.L."/>
        </authorList>
    </citation>
    <scope>FUNCTION</scope>
    <scope>IDENTIFICATION BY MASS SPECTROMETRY</scope>
</reference>
<reference key="31">
    <citation type="journal article" date="2010" name="Sci. Signal.">
        <title>Quantitative phosphoproteomics reveals widespread full phosphorylation site occupancy during mitosis.</title>
        <authorList>
            <person name="Olsen J.V."/>
            <person name="Vermeulen M."/>
            <person name="Santamaria A."/>
            <person name="Kumar C."/>
            <person name="Miller M.L."/>
            <person name="Jensen L.J."/>
            <person name="Gnad F."/>
            <person name="Cox J."/>
            <person name="Jensen T.S."/>
            <person name="Nigg E.A."/>
            <person name="Brunak S."/>
            <person name="Mann M."/>
        </authorList>
    </citation>
    <scope>ACETYLATION [LARGE SCALE ANALYSIS] AT SER-2</scope>
    <scope>PHOSPHORYLATION [LARGE SCALE ANALYSIS] AT SER-2; SER-4 AND SER-6</scope>
    <scope>CLEAVAGE OF INITIATOR METHIONINE [LARGE SCALE ANALYSIS]</scope>
    <scope>IDENTIFICATION BY MASS SPECTROMETRY [LARGE SCALE ANALYSIS]</scope>
    <source>
        <tissue>Cervix carcinoma</tissue>
    </source>
</reference>
<reference key="32">
    <citation type="journal article" date="2011" name="BMC Syst. Biol.">
        <title>Initial characterization of the human central proteome.</title>
        <authorList>
            <person name="Burkard T.R."/>
            <person name="Planyavsky M."/>
            <person name="Kaupe I."/>
            <person name="Breitwieser F.P."/>
            <person name="Buerckstuemmer T."/>
            <person name="Bennett K.L."/>
            <person name="Superti-Furga G."/>
            <person name="Colinge J."/>
        </authorList>
    </citation>
    <scope>IDENTIFICATION BY MASS SPECTROMETRY [LARGE SCALE ANALYSIS]</scope>
</reference>
<reference key="33">
    <citation type="journal article" date="2011" name="Sci. Signal.">
        <title>System-wide temporal characterization of the proteome and phosphoproteome of human embryonic stem cell differentiation.</title>
        <authorList>
            <person name="Rigbolt K.T."/>
            <person name="Prokhorova T.A."/>
            <person name="Akimov V."/>
            <person name="Henningsen J."/>
            <person name="Johansen P.T."/>
            <person name="Kratchmarova I."/>
            <person name="Kassem M."/>
            <person name="Mann M."/>
            <person name="Olsen J.V."/>
            <person name="Blagoev B."/>
        </authorList>
    </citation>
    <scope>PHOSPHORYLATION [LARGE SCALE ANALYSIS] AT SER-4; SER-6; SER-199; SER-365 AND SER-368</scope>
    <scope>IDENTIFICATION BY MASS SPECTROMETRY [LARGE SCALE ANALYSIS]</scope>
</reference>
<reference key="34">
    <citation type="journal article" date="2012" name="Proc. Natl. Acad. Sci. U.S.A.">
        <title>N-terminal acetylome analyses and functional insights of the N-terminal acetyltransferase NatB.</title>
        <authorList>
            <person name="Van Damme P."/>
            <person name="Lasa M."/>
            <person name="Polevoda B."/>
            <person name="Gazquez C."/>
            <person name="Elosegui-Artola A."/>
            <person name="Kim D.S."/>
            <person name="De Juan-Pardo E."/>
            <person name="Demeyer K."/>
            <person name="Hole K."/>
            <person name="Larrea E."/>
            <person name="Timmerman E."/>
            <person name="Prieto J."/>
            <person name="Arnesen T."/>
            <person name="Sherman F."/>
            <person name="Gevaert K."/>
            <person name="Aldabe R."/>
        </authorList>
    </citation>
    <scope>ACETYLATION [LARGE SCALE ANALYSIS] AT MET-1 AND SER-2</scope>
    <scope>CLEAVAGE OF INITIATOR METHIONINE [LARGE SCALE ANALYSIS]</scope>
    <scope>IDENTIFICATION BY MASS SPECTROMETRY [LARGE SCALE ANALYSIS]</scope>
</reference>
<reference key="35">
    <citation type="journal article" date="2013" name="J. Proteome Res.">
        <title>Toward a comprehensive characterization of a human cancer cell phosphoproteome.</title>
        <authorList>
            <person name="Zhou H."/>
            <person name="Di Palma S."/>
            <person name="Preisinger C."/>
            <person name="Peng M."/>
            <person name="Polat A.N."/>
            <person name="Heck A.J."/>
            <person name="Mohammed S."/>
        </authorList>
    </citation>
    <scope>PHOSPHORYLATION [LARGE SCALE ANALYSIS] AT SER-2; SER-4; SER-6; SER-337; SER-361; SER-364; SER-365 AND SER-368</scope>
    <scope>IDENTIFICATION BY MASS SPECTROMETRY [LARGE SCALE ANALYSIS]</scope>
    <source>
        <tissue>Cervix carcinoma</tissue>
        <tissue>Erythroleukemia</tissue>
    </source>
</reference>
<reference key="36">
    <citation type="journal article" date="2014" name="Hum. Mol. Genet.">
        <title>C9ORF72, implicated in amytrophic lateral sclerosis and frontotemporal dementia, regulates endosomal trafficking.</title>
        <authorList>
            <person name="Farg M.A."/>
            <person name="Sundaramoorthy V."/>
            <person name="Sultana J.M."/>
            <person name="Yang S."/>
            <person name="Atkinson R.A."/>
            <person name="Levina V."/>
            <person name="Halloran M.A."/>
            <person name="Gleeson P.A."/>
            <person name="Blair I.P."/>
            <person name="Soo K.Y."/>
            <person name="King A.E."/>
            <person name="Atkin J.D."/>
        </authorList>
    </citation>
    <scope>INTERACTION WITH C9ORF72</scope>
</reference>
<reference key="37">
    <citation type="journal article" date="2014" name="J. Proteomics">
        <title>An enzyme assisted RP-RPLC approach for in-depth analysis of human liver phosphoproteome.</title>
        <authorList>
            <person name="Bian Y."/>
            <person name="Song C."/>
            <person name="Cheng K."/>
            <person name="Dong M."/>
            <person name="Wang F."/>
            <person name="Huang J."/>
            <person name="Sun D."/>
            <person name="Wang L."/>
            <person name="Ye M."/>
            <person name="Zou H."/>
        </authorList>
    </citation>
    <scope>IDENTIFICATION BY MASS SPECTROMETRY [LARGE SCALE ANALYSIS]</scope>
    <source>
        <tissue>Liver</tissue>
    </source>
</reference>
<reference key="38">
    <citation type="journal article" date="2014" name="Mol. Cell. Proteomics">
        <title>Immunoaffinity enrichment and mass spectrometry analysis of protein methylation.</title>
        <authorList>
            <person name="Guo A."/>
            <person name="Gu H."/>
            <person name="Zhou J."/>
            <person name="Mulhern D."/>
            <person name="Wang Y."/>
            <person name="Lee K.A."/>
            <person name="Yang V."/>
            <person name="Aguiar M."/>
            <person name="Kornhauser J."/>
            <person name="Jia X."/>
            <person name="Ren J."/>
            <person name="Beausoleil S.A."/>
            <person name="Silva J.C."/>
            <person name="Vemulapalli V."/>
            <person name="Bedford M.T."/>
            <person name="Comb M.J."/>
        </authorList>
    </citation>
    <scope>METHYLATION [LARGE SCALE ANALYSIS] AT ARG-206; ARG-218; ARG-225; ARG-232; ARG-336; ARG-352 AND ARG-370</scope>
    <scope>IDENTIFICATION BY MASS SPECTROMETRY [LARGE SCALE ANALYSIS]</scope>
    <source>
        <tissue>Colon carcinoma</tissue>
    </source>
</reference>
<reference key="39">
    <citation type="journal article" date="2015" name="Brain">
        <title>Peptidylprolyl isomerase A governs TARDBP function and assembly in heterogeneous nuclear ribonucleoprotein complexes.</title>
        <authorList>
            <person name="Lauranzano E."/>
            <person name="Pozzi S."/>
            <person name="Pasetto L."/>
            <person name="Stucchi R."/>
            <person name="Massignan T."/>
            <person name="Paolella K."/>
            <person name="Mombrini M."/>
            <person name="Nardo G."/>
            <person name="Lunetta C."/>
            <person name="Corbo M."/>
            <person name="Mora G."/>
            <person name="Bendotti C."/>
            <person name="Bonetto V."/>
        </authorList>
    </citation>
    <scope>INTERACTION WITH PPIA</scope>
</reference>
<reference key="40">
    <citation type="journal article" date="2015" name="Mol. Cell. Proteomics">
        <title>System-wide analysis of SUMOylation dynamics in response to replication stress reveals novel small ubiquitin-like modified target proteins and acceptor lysines relevant for genome stability.</title>
        <authorList>
            <person name="Xiao Z."/>
            <person name="Chang J.G."/>
            <person name="Hendriks I.A."/>
            <person name="Sigurdsson J.O."/>
            <person name="Olsen J.V."/>
            <person name="Vertegaal A.C."/>
        </authorList>
    </citation>
    <scope>SUMOYLATION [LARGE SCALE ANALYSIS] AT LYS-8</scope>
    <scope>IDENTIFICATION BY MASS SPECTROMETRY [LARGE SCALE ANALYSIS]</scope>
</reference>
<reference key="41">
    <citation type="journal article" date="2015" name="Proteomics">
        <title>N-terminome analysis of the human mitochondrial proteome.</title>
        <authorList>
            <person name="Vaca Jacome A.S."/>
            <person name="Rabilloud T."/>
            <person name="Schaeffer-Reiss C."/>
            <person name="Rompais M."/>
            <person name="Ayoub D."/>
            <person name="Lane L."/>
            <person name="Bairoch A."/>
            <person name="Van Dorsselaer A."/>
            <person name="Carapito C."/>
        </authorList>
    </citation>
    <scope>IDENTIFICATION BY MASS SPECTROMETRY [LARGE SCALE ANALYSIS]</scope>
</reference>
<reference key="42">
    <citation type="journal article" date="2017" name="Mol. Cell">
        <title>A Compendium of RNA-Binding Proteins that Regulate MicroRNA Biogenesis.</title>
        <authorList>
            <person name="Treiber T."/>
            <person name="Treiber N."/>
            <person name="Plessmann U."/>
            <person name="Harlander S."/>
            <person name="Daiss J.L."/>
            <person name="Eichner N."/>
            <person name="Lehmann G."/>
            <person name="Schall K."/>
            <person name="Urlaub H."/>
            <person name="Meister G."/>
        </authorList>
    </citation>
    <scope>FUNCTION</scope>
    <scope>MIRNA-BINDING</scope>
</reference>
<reference key="43">
    <citation type="journal article" date="2017" name="Mol. Cell">
        <title>A Peptide Encoded by a Putative lncRNA HOXB-AS3 Suppresses Colon Cancer Growth.</title>
        <authorList>
            <person name="Huang J.Z."/>
            <person name="Chen M."/>
            <person name="Chen D."/>
            <person name="Gao X.C."/>
            <person name="Zhu S."/>
            <person name="Huang H."/>
            <person name="Hu M."/>
            <person name="Zhu H."/>
            <person name="Yan G.R."/>
        </authorList>
    </citation>
    <scope>IDENTIFICATION BY MASS SPECTROMETRY</scope>
    <scope>FUNCTION</scope>
    <scope>INTERACTION WITH HOXB-AS3 PEPTIDE</scope>
    <scope>MUTAGENESIS OF ARG-218; ARG-225 AND ARG-232</scope>
</reference>
<reference key="44">
    <citation type="journal article" date="2017" name="Nat. Struct. Mol. Biol.">
        <title>Site-specific mapping of the human SUMO proteome reveals co-modification with phosphorylation.</title>
        <authorList>
            <person name="Hendriks I.A."/>
            <person name="Lyon D."/>
            <person name="Young C."/>
            <person name="Jensen L.J."/>
            <person name="Vertegaal A.C."/>
            <person name="Nielsen M.L."/>
        </authorList>
    </citation>
    <scope>SUMOYLATION [LARGE SCALE ANALYSIS] AT LYS-3; LYS-8; LYS-78; LYS-179; LYS-183 AND LYS-350</scope>
    <scope>IDENTIFICATION BY MASS SPECTROMETRY [LARGE SCALE ANALYSIS]</scope>
</reference>
<reference key="45">
    <citation type="journal article" date="2019" name="PLoS ONE">
        <title>EV71 3C protease induces apoptosis by cleavage of hnRNP A1 to promote apaf-1 translation.</title>
        <authorList>
            <person name="Li M.L."/>
            <person name="Lin J.Y."/>
            <person name="Chen B.S."/>
            <person name="Weng K.F."/>
            <person name="Shih S.R."/>
            <person name="Calderon J.D."/>
            <person name="Tolbert B.S."/>
            <person name="Brewer G."/>
        </authorList>
    </citation>
    <scope>FUNCTION (MICROBIAL INFECTION)</scope>
    <scope>FUNCTION</scope>
</reference>
<reference key="46">
    <citation type="journal article" date="2021" name="Biochem. Biophys. Res. Commun.">
        <title>Overexpression of SARS-CoV-2 protein ORF6 dislocates RAE1 and NUP98 from the nuclear pore complex.</title>
        <authorList>
            <person name="Kato K."/>
            <person name="Ikliptikawati D.K."/>
            <person name="Kobayashi A."/>
            <person name="Kondo H."/>
            <person name="Lim K."/>
            <person name="Hazawa M."/>
            <person name="Wong R.W."/>
        </authorList>
    </citation>
    <scope>SUBCELLULAR LOCATION (MICROBIAL INFECTION)</scope>
</reference>
<reference key="47">
    <citation type="journal article" date="1990" name="FEBS Lett.">
        <title>Modeling by homology of RNA binding domain in A1 hnRNP protein.</title>
        <authorList>
            <person name="Ghetti A."/>
            <person name="Bolognesi M."/>
            <person name="Cobianchi F."/>
            <person name="Morandi C."/>
        </authorList>
    </citation>
    <scope>3D-STRUCTURE MODELING OF 107-190</scope>
</reference>
<reference key="48">
    <citation type="journal article" date="1997" name="Nat. Struct. Biol.">
        <title>Crystal structure of the two RNA binding domains of human hnRNP A1 at 1.75-A resolution.</title>
        <authorList>
            <person name="Shamoo Y."/>
            <person name="Krueger U."/>
            <person name="Rice L.M."/>
            <person name="Williams K.R."/>
            <person name="Steitz T.A."/>
        </authorList>
    </citation>
    <scope>X-RAY CRYSTALLOGRAPHY (1.75 ANGSTROMS) OF 9-181</scope>
</reference>
<reference key="49">
    <citation type="journal article" date="1997" name="Structure">
        <title>Crystal structure of human UP1, the domain of hnRNP A1 that contains two RNA-recognition motifs.</title>
        <authorList>
            <person name="Xu R.M."/>
            <person name="Jokhan L."/>
            <person name="Cheng X."/>
            <person name="Mayeda A."/>
            <person name="Krainer A.R."/>
        </authorList>
    </citation>
    <scope>X-RAY CRYSTALLOGRAPHY (1.9 ANGSTROMS) OF 7-182</scope>
</reference>
<reference key="50">
    <citation type="journal article" date="2013" name="Nature">
        <title>Mutations in prion-like domains in hnRNPA2B1 and hnRNPA1 cause multisystem proteinopathy and ALS.</title>
        <authorList>
            <person name="Kim H.J."/>
            <person name="Kim N.C."/>
            <person name="Wang Y.D."/>
            <person name="Scarborough E.A."/>
            <person name="Moore J."/>
            <person name="Diaz Z."/>
            <person name="MacLea K.S."/>
            <person name="Freibaum B."/>
            <person name="Li S."/>
            <person name="Molliex A."/>
            <person name="Kanagaraj A.P."/>
            <person name="Carter R."/>
            <person name="Boylan K.B."/>
            <person name="Wojtas A.M."/>
            <person name="Rademakers R."/>
            <person name="Pinkus J.L."/>
            <person name="Greenberg S.A."/>
            <person name="Trojanowski J.Q."/>
            <person name="Traynor B.J."/>
            <person name="Smith B.N."/>
            <person name="Topp S."/>
            <person name="Gkazi A.S."/>
            <person name="Miller J."/>
            <person name="Shaw C.E."/>
            <person name="Kottlors M."/>
            <person name="Kirschner J."/>
            <person name="Pestronk A."/>
            <person name="Li Y.R."/>
            <person name="Ford A.F."/>
            <person name="Gitler A.D."/>
            <person name="Benatar M."/>
            <person name="King O.D."/>
            <person name="Kimonis V.E."/>
            <person name="Ross E.D."/>
            <person name="Weihl C.C."/>
            <person name="Shorter J."/>
            <person name="Taylor J.P."/>
        </authorList>
    </citation>
    <scope>VARIANT IBMPFD3 VAL-314</scope>
    <scope>VARIANTS ALS20 ASN-314 AND SER-319</scope>
    <scope>INVOLVEMENT IN IBMPFD3</scope>
    <scope>INVOLVEMENT IN ALS20</scope>
</reference>
<reference key="51">
    <citation type="journal article" date="2015" name="Hum. Mol. Genet.">
        <title>ALS-linked mutations in ubiquilin-2 or hnRNPA1 reduce interaction between ubiquilin-2 and hnRNPA1.</title>
        <authorList>
            <person name="Gilpin K.M."/>
            <person name="Chang L."/>
            <person name="Monteiro M.J."/>
        </authorList>
    </citation>
    <scope>CHARACTERIZATION OF VARIANT IBMPFD3 VAL-314</scope>
    <scope>INTERACTION WITH UBQLN2</scope>
</reference>
<reference key="52">
    <citation type="journal article" date="2016" name="Neurology">
        <title>Whole-exome sequencing identifies a missense mutation in hnRNPA1 in a family with flail arm ALS.</title>
        <authorList>
            <person name="Liu Q."/>
            <person name="Shu S."/>
            <person name="Wang R.R."/>
            <person name="Liu F."/>
            <person name="Cui B."/>
            <person name="Guo X.N."/>
            <person name="Lu C.X."/>
            <person name="Li X.G."/>
            <person name="Liu M.S."/>
            <person name="Peng B."/>
            <person name="Cui L.Y."/>
            <person name="Zhang X."/>
        </authorList>
    </citation>
    <scope>VARIANTS ALS20 LYS-277 AND SER-340</scope>
    <scope>CHARACTERIZATION OF VARIANT ALS20 SER-340</scope>
    <scope>SUBCELLULAR LOCATION</scope>
    <scope>VARIANT ARG-283</scope>
</reference>
<reference key="53">
    <citation type="journal article" date="2021" name="Neurol. Genet.">
        <title>Dominant Distal Myopathy 3 (MPD3) Caused by a Deletion in the HNRNPA1 Gene.</title>
        <authorList>
            <person name="Hackman P."/>
            <person name="Rusanen S.M."/>
            <person name="Johari M."/>
            <person name="Vihola A."/>
            <person name="Jonson P.H."/>
            <person name="Sarparanta J."/>
            <person name="Donner K."/>
            <person name="Lahermo P."/>
            <person name="Koivunen S."/>
            <person name="Luque H."/>
            <person name="Soininen M."/>
            <person name="Mahjneh I."/>
            <person name="Auranen M."/>
            <person name="Arumilli M."/>
            <person name="Savarese M."/>
            <person name="Udd B."/>
        </authorList>
    </citation>
    <scope>INVOLVEMENT IN MPD3</scope>
</reference>
<feature type="chain" id="PRO_0000424509" description="Heterogeneous nuclear ribonucleoprotein A1">
    <location>
        <begin position="1"/>
        <end position="372"/>
    </location>
</feature>
<feature type="initiator methionine" description="Removed; alternate" evidence="24 34 36">
    <location>
        <position position="1"/>
    </location>
</feature>
<feature type="chain" id="PRO_0000081828" description="Heterogeneous nuclear ribonucleoprotein A1, N-terminally processed">
    <location>
        <begin position="2"/>
        <end position="372"/>
    </location>
</feature>
<feature type="domain" description="RRM 1" evidence="4">
    <location>
        <begin position="14"/>
        <end position="97"/>
    </location>
</feature>
<feature type="domain" description="RRM 2" evidence="4">
    <location>
        <begin position="105"/>
        <end position="184"/>
    </location>
</feature>
<feature type="region of interest" description="Globular A domain">
    <location>
        <begin position="4"/>
        <end position="94"/>
    </location>
</feature>
<feature type="region of interest" description="Globular B domain">
    <location>
        <begin position="95"/>
        <end position="185"/>
    </location>
</feature>
<feature type="region of interest" description="Disordered" evidence="5">
    <location>
        <begin position="182"/>
        <end position="216"/>
    </location>
</feature>
<feature type="region of interest" description="RNA-binding RGG-box">
    <location>
        <begin position="218"/>
        <end position="240"/>
    </location>
</feature>
<feature type="region of interest" description="Disordered" evidence="5">
    <location>
        <begin position="317"/>
        <end position="372"/>
    </location>
</feature>
<feature type="region of interest" description="Nuclear targeting sequence (M9)">
    <location>
        <begin position="320"/>
        <end position="357"/>
    </location>
</feature>
<feature type="compositionally biased region" description="Gly residues" evidence="5">
    <location>
        <begin position="197"/>
        <end position="216"/>
    </location>
</feature>
<feature type="compositionally biased region" description="Gly residues" evidence="5">
    <location>
        <begin position="328"/>
        <end position="346"/>
    </location>
</feature>
<feature type="compositionally biased region" description="Low complexity" evidence="5">
    <location>
        <begin position="360"/>
        <end position="372"/>
    </location>
</feature>
<feature type="modified residue" description="N-acetylmethionine" evidence="36">
    <location>
        <position position="1"/>
    </location>
</feature>
<feature type="modified residue" description="N-acetylserine; in Heterogeneous nuclear ribonucleoprotein A1, N-terminally processed" evidence="24 34 36">
    <location>
        <position position="2"/>
    </location>
</feature>
<feature type="modified residue" description="Phosphoserine" evidence="34 37">
    <location>
        <position position="2"/>
    </location>
</feature>
<feature type="modified residue" description="N6-acetyllysine; alternate" evidence="33">
    <location>
        <position position="3"/>
    </location>
</feature>
<feature type="modified residue" description="Phosphoserine" evidence="34 35 37">
    <location>
        <position position="4"/>
    </location>
</feature>
<feature type="modified residue" description="Phosphoserine" evidence="32 34 35 37">
    <location>
        <position position="6"/>
    </location>
</feature>
<feature type="modified residue" description="Phosphoserine" evidence="3">
    <location>
        <position position="22"/>
    </location>
</feature>
<feature type="modified residue" description="Phosphoserine; by MKNK2" evidence="8">
    <location>
        <position position="192"/>
    </location>
</feature>
<feature type="modified residue" description="Asymmetric dimethylarginine; alternate" evidence="2">
    <location>
        <position position="194"/>
    </location>
</feature>
<feature type="modified residue" description="Dimethylated arginine; alternate" evidence="31">
    <location>
        <position position="194"/>
    </location>
</feature>
<feature type="modified residue" description="Omega-N-methylarginine; alternate" evidence="3">
    <location>
        <position position="194"/>
    </location>
</feature>
<feature type="modified residue" description="Phosphoserine" evidence="35">
    <location>
        <position position="199"/>
    </location>
</feature>
<feature type="modified residue" description="Asymmetric dimethylarginine; alternate" evidence="24 38">
    <location>
        <position position="206"/>
    </location>
</feature>
<feature type="modified residue" description="Dimethylated arginine; alternate" evidence="31">
    <location>
        <position position="206"/>
    </location>
</feature>
<feature type="modified residue" description="Omega-N-methylarginine; alternate" evidence="24 38">
    <location>
        <position position="206"/>
    </location>
</feature>
<feature type="modified residue" description="Asymmetric dimethylarginine; alternate" evidence="38">
    <location>
        <position position="218"/>
    </location>
</feature>
<feature type="modified residue" description="Omega-N-methylarginine; alternate" evidence="38">
    <location>
        <position position="218"/>
    </location>
</feature>
<feature type="modified residue" description="Asymmetric dimethylarginine; alternate" evidence="24 38">
    <location>
        <position position="225"/>
    </location>
</feature>
<feature type="modified residue" description="Dimethylated arginine; alternate" evidence="31">
    <location>
        <position position="225"/>
    </location>
</feature>
<feature type="modified residue" description="Omega-N-methylarginine; alternate" evidence="24 38">
    <location>
        <position position="225"/>
    </location>
</feature>
<feature type="modified residue" description="Asymmetric dimethylarginine; alternate" evidence="1">
    <location>
        <position position="232"/>
    </location>
</feature>
<feature type="modified residue" description="Omega-N-methylarginine; alternate" evidence="38">
    <location>
        <position position="232"/>
    </location>
</feature>
<feature type="modified residue" description="Omega-N-methylarginine" evidence="38">
    <location>
        <position position="336"/>
    </location>
</feature>
<feature type="modified residue" description="Phosphoserine" evidence="37">
    <location>
        <position position="337"/>
    </location>
</feature>
<feature type="modified residue" description="N6-acetyllysine; alternate" evidence="33">
    <location>
        <position position="350"/>
    </location>
</feature>
<feature type="modified residue" description="Omega-N-methylarginine" evidence="38">
    <location>
        <position position="352"/>
    </location>
</feature>
<feature type="modified residue" description="Phosphoserine" evidence="37">
    <location>
        <position position="361"/>
    </location>
</feature>
<feature type="modified residue" description="Phosphoserine; by MKNK2" evidence="8">
    <location>
        <position position="362"/>
    </location>
</feature>
<feature type="modified residue" description="Phosphoserine; by MKNK2" evidence="8">
    <location>
        <position position="363"/>
    </location>
</feature>
<feature type="modified residue" description="Phosphoserine; by MKNK2" evidence="8 37">
    <location>
        <position position="364"/>
    </location>
</feature>
<feature type="modified residue" description="Phosphoserine" evidence="35 37">
    <location>
        <position position="365"/>
    </location>
</feature>
<feature type="modified residue" description="Phosphoserine" evidence="32 35 37">
    <location>
        <position position="368"/>
    </location>
</feature>
<feature type="modified residue" description="Omega-N-methylarginine" evidence="38">
    <location>
        <position position="370"/>
    </location>
</feature>
<feature type="cross-link" description="Glycyl lysine isopeptide (Lys-Gly) (interchain with G-Cter in SUMO2); alternate" evidence="40">
    <location>
        <position position="3"/>
    </location>
</feature>
<feature type="cross-link" description="Glycyl lysine isopeptide (Lys-Gly) (interchain with G-Cter in SUMO2)" evidence="39 40">
    <location>
        <position position="8"/>
    </location>
</feature>
<feature type="cross-link" description="Glycyl lysine isopeptide (Lys-Gly) (interchain with G-Cter in SUMO2)" evidence="40">
    <location>
        <position position="78"/>
    </location>
</feature>
<feature type="cross-link" description="Glycyl lysine isopeptide (Lys-Gly) (interchain with G-Cter in SUMO)" evidence="7">
    <location>
        <position position="113"/>
    </location>
</feature>
<feature type="cross-link" description="Glycyl lysine isopeptide (Lys-Gly) (interchain with G-Cter in SUMO2)" evidence="40">
    <location>
        <position position="179"/>
    </location>
</feature>
<feature type="cross-link" description="Glycyl lysine isopeptide (Lys-Gly) (interchain with G-Cter in SUMO2)" evidence="40">
    <location>
        <position position="183"/>
    </location>
</feature>
<feature type="cross-link" description="Glycyl lysine isopeptide (Lys-Gly) (interchain with G-Cter in SUMO2); alternate" evidence="40">
    <location>
        <position position="350"/>
    </location>
</feature>
<feature type="splice variant" id="VSP_034076" description="In isoform 2." evidence="26">
    <location>
        <begin position="203"/>
        <end position="307"/>
    </location>
</feature>
<feature type="splice variant" id="VSP_005824" description="In isoform A1-A." evidence="25 26 27 28">
    <location>
        <begin position="252"/>
        <end position="303"/>
    </location>
</feature>
<feature type="sequence variant" id="VAR_077531" description="In ALS20; uncertain significance." evidence="17">
    <original>Q</original>
    <variation>K</variation>
    <location>
        <position position="277"/>
    </location>
</feature>
<feature type="sequence variant" id="VAR_077532" description="In dbSNP:rs375259222." evidence="17">
    <original>G</original>
    <variation>R</variation>
    <location>
        <position position="283"/>
    </location>
</feature>
<feature type="sequence variant" id="VAR_070588" description="In ALS20; dbSNP:rs397518453." evidence="13">
    <original>D</original>
    <variation>N</variation>
    <location>
        <position position="314"/>
    </location>
</feature>
<feature type="sequence variant" id="VAR_070589" description="In IBMPFD3; reduces binding to UBQLN2; dbSNP:rs397518452." evidence="13 15">
    <original>D</original>
    <variation>V</variation>
    <location>
        <position position="314"/>
    </location>
</feature>
<feature type="sequence variant" id="VAR_070590" description="In ALS20; dbSNP:rs397518454." evidence="13">
    <original>N</original>
    <variation>S</variation>
    <location>
        <position position="319"/>
    </location>
</feature>
<feature type="sequence variant" id="VAR_077533" description="In ALS20; increases subcellular localization of HNRNPA1 in cytoplasmic inclusions with stress granules." evidence="17">
    <original>P</original>
    <variation>S</variation>
    <location>
        <position position="340"/>
    </location>
</feature>
<feature type="mutagenesis site" description="Abolishes interaction with HOXB-AS3 peptide; when associated with A-225 and A-232." evidence="19">
    <original>R</original>
    <variation>A</variation>
    <location>
        <position position="218"/>
    </location>
</feature>
<feature type="mutagenesis site" description="Abolishes interaction with HOXB-AS3 peptide; when associated with A-218 and A-232." evidence="19">
    <original>R</original>
    <variation>A</variation>
    <location>
        <position position="225"/>
    </location>
</feature>
<feature type="mutagenesis site" description="Abolishes interaction with HOXB-AS3 peptide; when associated with A-218 and A-225." evidence="19">
    <original>R</original>
    <variation>A</variation>
    <location>
        <position position="232"/>
    </location>
</feature>
<feature type="mutagenesis site" description="No nuclear import nor export." evidence="23">
    <original>G</original>
    <variation>A</variation>
    <location>
        <position position="326"/>
    </location>
</feature>
<feature type="mutagenesis site" description="No nuclear import nor export." evidence="23">
    <original>P</original>
    <variation>A</variation>
    <location>
        <position position="327"/>
    </location>
</feature>
<feature type="mutagenesis site" description="Normal nuclear import and export." evidence="23">
    <original>GG</original>
    <variation>LL</variation>
    <location>
        <begin position="334"/>
        <end position="335"/>
    </location>
</feature>
<feature type="sequence conflict" description="In Ref. 2; CAA29922." evidence="29" ref="2">
    <original>Y</original>
    <variation>F</variation>
    <location>
        <position position="128"/>
    </location>
</feature>
<feature type="sequence conflict" description="In Ref. 8; CAA27874." evidence="29" ref="8">
    <original>R</original>
    <variation>P</variation>
    <location>
        <position position="140"/>
    </location>
</feature>
<feature type="sequence conflict" description="In Ref. 2; CAA29922." evidence="29" ref="2">
    <original>R</original>
    <variation>K</variation>
    <location>
        <position position="146"/>
    </location>
</feature>
<feature type="helix" evidence="41">
    <location>
        <begin position="11"/>
        <end position="14"/>
    </location>
</feature>
<feature type="strand" evidence="41">
    <location>
        <begin position="15"/>
        <end position="20"/>
    </location>
</feature>
<feature type="helix" evidence="41">
    <location>
        <begin position="27"/>
        <end position="34"/>
    </location>
</feature>
<feature type="helix" evidence="41">
    <location>
        <begin position="35"/>
        <end position="37"/>
    </location>
</feature>
<feature type="strand" evidence="41">
    <location>
        <begin position="40"/>
        <end position="47"/>
    </location>
</feature>
<feature type="turn" evidence="41">
    <location>
        <begin position="49"/>
        <end position="51"/>
    </location>
</feature>
<feature type="strand" evidence="41">
    <location>
        <begin position="54"/>
        <end position="64"/>
    </location>
</feature>
<feature type="helix" evidence="41">
    <location>
        <begin position="65"/>
        <end position="73"/>
    </location>
</feature>
<feature type="strand" evidence="43">
    <location>
        <begin position="76"/>
        <end position="79"/>
    </location>
</feature>
<feature type="strand" evidence="41">
    <location>
        <begin position="85"/>
        <end position="88"/>
    </location>
</feature>
<feature type="helix" evidence="45">
    <location>
        <begin position="92"/>
        <end position="94"/>
    </location>
</feature>
<feature type="turn" evidence="42">
    <location>
        <begin position="98"/>
        <end position="101"/>
    </location>
</feature>
<feature type="strand" evidence="41">
    <location>
        <begin position="105"/>
        <end position="110"/>
    </location>
</feature>
<feature type="turn" evidence="41">
    <location>
        <begin position="113"/>
        <end position="115"/>
    </location>
</feature>
<feature type="helix" evidence="41">
    <location>
        <begin position="118"/>
        <end position="125"/>
    </location>
</feature>
<feature type="turn" evidence="41">
    <location>
        <begin position="126"/>
        <end position="128"/>
    </location>
</feature>
<feature type="strand" evidence="41">
    <location>
        <begin position="131"/>
        <end position="138"/>
    </location>
</feature>
<feature type="turn" evidence="41">
    <location>
        <begin position="140"/>
        <end position="142"/>
    </location>
</feature>
<feature type="strand" evidence="41">
    <location>
        <begin position="145"/>
        <end position="155"/>
    </location>
</feature>
<feature type="helix" evidence="41">
    <location>
        <begin position="156"/>
        <end position="164"/>
    </location>
</feature>
<feature type="strand" evidence="42">
    <location>
        <begin position="168"/>
        <end position="170"/>
    </location>
</feature>
<feature type="strand" evidence="41">
    <location>
        <begin position="176"/>
        <end position="179"/>
    </location>
</feature>
<feature type="helix" evidence="42">
    <location>
        <begin position="183"/>
        <end position="188"/>
    </location>
</feature>
<feature type="strand" evidence="44">
    <location>
        <begin position="305"/>
        <end position="307"/>
    </location>
</feature>
<feature type="strand" evidence="44">
    <location>
        <begin position="312"/>
        <end position="314"/>
    </location>
</feature>
<feature type="strand" evidence="44">
    <location>
        <begin position="317"/>
        <end position="326"/>
    </location>
</feature>
<feature type="strand" evidence="44">
    <location>
        <begin position="330"/>
        <end position="333"/>
    </location>
</feature>
<name>ROA1_HUMAN</name>
<dbReference type="EMBL" id="X12671">
    <property type="protein sequence ID" value="CAA31191.1"/>
    <property type="molecule type" value="Genomic_DNA"/>
</dbReference>
<dbReference type="EMBL" id="X06747">
    <property type="protein sequence ID" value="CAA29922.1"/>
    <property type="molecule type" value="mRNA"/>
</dbReference>
<dbReference type="EMBL" id="X79536">
    <property type="protein sequence ID" value="CAA56072.1"/>
    <property type="molecule type" value="mRNA"/>
</dbReference>
<dbReference type="EMBL" id="AK291113">
    <property type="protein sequence ID" value="BAF83802.1"/>
    <property type="molecule type" value="mRNA"/>
</dbReference>
<dbReference type="EMBL" id="AC078778">
    <property type="status" value="NOT_ANNOTATED_CDS"/>
    <property type="molecule type" value="Genomic_DNA"/>
</dbReference>
<dbReference type="EMBL" id="CH471054">
    <property type="protein sequence ID" value="EAW96761.1"/>
    <property type="molecule type" value="Genomic_DNA"/>
</dbReference>
<dbReference type="EMBL" id="BC002355">
    <property type="protein sequence ID" value="AAH02355.1"/>
    <property type="molecule type" value="mRNA"/>
</dbReference>
<dbReference type="EMBL" id="BC009600">
    <property type="protein sequence ID" value="AAH09600.1"/>
    <property type="molecule type" value="mRNA"/>
</dbReference>
<dbReference type="EMBL" id="BC012158">
    <property type="protein sequence ID" value="AAH12158.1"/>
    <property type="molecule type" value="mRNA"/>
</dbReference>
<dbReference type="EMBL" id="BC033714">
    <property type="protein sequence ID" value="AAH33714.1"/>
    <property type="molecule type" value="mRNA"/>
</dbReference>
<dbReference type="EMBL" id="BC052296">
    <property type="protein sequence ID" value="AAH52296.1"/>
    <property type="molecule type" value="mRNA"/>
</dbReference>
<dbReference type="EMBL" id="BC070315">
    <property type="protein sequence ID" value="AAH70315.1"/>
    <property type="molecule type" value="mRNA"/>
</dbReference>
<dbReference type="EMBL" id="BC074502">
    <property type="protein sequence ID" value="AAH74502.1"/>
    <property type="molecule type" value="mRNA"/>
</dbReference>
<dbReference type="EMBL" id="BC103707">
    <property type="protein sequence ID" value="AAI03708.1"/>
    <property type="molecule type" value="mRNA"/>
</dbReference>
<dbReference type="EMBL" id="X04347">
    <property type="protein sequence ID" value="CAA27874.1"/>
    <property type="molecule type" value="mRNA"/>
</dbReference>
<dbReference type="CCDS" id="CCDS41793.1">
    <molecule id="P09651-2"/>
</dbReference>
<dbReference type="CCDS" id="CCDS44909.1">
    <molecule id="P09651-1"/>
</dbReference>
<dbReference type="PIR" id="S02061">
    <property type="entry name" value="S02061"/>
</dbReference>
<dbReference type="PIR" id="S12520">
    <property type="entry name" value="S12520"/>
</dbReference>
<dbReference type="RefSeq" id="NP_002127.1">
    <molecule id="P09651-2"/>
    <property type="nucleotide sequence ID" value="NM_002136.4"/>
</dbReference>
<dbReference type="RefSeq" id="NP_112420.1">
    <molecule id="P09651-1"/>
    <property type="nucleotide sequence ID" value="NM_031157.4"/>
</dbReference>
<dbReference type="RefSeq" id="XP_005268883.1">
    <property type="nucleotide sequence ID" value="XM_005268826.1"/>
</dbReference>
<dbReference type="PDB" id="1HA1">
    <property type="method" value="X-ray"/>
    <property type="resolution" value="1.75 A"/>
    <property type="chains" value="A=1-184"/>
</dbReference>
<dbReference type="PDB" id="1L3K">
    <property type="method" value="X-ray"/>
    <property type="resolution" value="1.10 A"/>
    <property type="chains" value="A=1-196"/>
</dbReference>
<dbReference type="PDB" id="1PGZ">
    <property type="method" value="X-ray"/>
    <property type="resolution" value="2.60 A"/>
    <property type="chains" value="A=2-196"/>
</dbReference>
<dbReference type="PDB" id="1PO6">
    <property type="method" value="X-ray"/>
    <property type="resolution" value="2.10 A"/>
    <property type="chains" value="A=8-190"/>
</dbReference>
<dbReference type="PDB" id="1U1K">
    <property type="method" value="X-ray"/>
    <property type="resolution" value="2.00 A"/>
    <property type="chains" value="A=1-196"/>
</dbReference>
<dbReference type="PDB" id="1U1L">
    <property type="method" value="X-ray"/>
    <property type="resolution" value="2.00 A"/>
    <property type="chains" value="A=1-196"/>
</dbReference>
<dbReference type="PDB" id="1U1M">
    <property type="method" value="X-ray"/>
    <property type="resolution" value="2.00 A"/>
    <property type="chains" value="A=1-196"/>
</dbReference>
<dbReference type="PDB" id="1U1N">
    <property type="method" value="X-ray"/>
    <property type="resolution" value="2.10 A"/>
    <property type="chains" value="A=1-196"/>
</dbReference>
<dbReference type="PDB" id="1U1O">
    <property type="method" value="X-ray"/>
    <property type="resolution" value="2.00 A"/>
    <property type="chains" value="A=1-196"/>
</dbReference>
<dbReference type="PDB" id="1U1P">
    <property type="method" value="X-ray"/>
    <property type="resolution" value="1.90 A"/>
    <property type="chains" value="A=1-196"/>
</dbReference>
<dbReference type="PDB" id="1U1Q">
    <property type="method" value="X-ray"/>
    <property type="resolution" value="1.80 A"/>
    <property type="chains" value="A=1-196"/>
</dbReference>
<dbReference type="PDB" id="1U1R">
    <property type="method" value="X-ray"/>
    <property type="resolution" value="1.80 A"/>
    <property type="chains" value="A=1-196"/>
</dbReference>
<dbReference type="PDB" id="1UP1">
    <property type="method" value="X-ray"/>
    <property type="resolution" value="1.90 A"/>
    <property type="chains" value="A=3-184"/>
</dbReference>
<dbReference type="PDB" id="2H4M">
    <property type="method" value="X-ray"/>
    <property type="resolution" value="3.05 A"/>
    <property type="chains" value="C/D=309-357"/>
</dbReference>
<dbReference type="PDB" id="2LYV">
    <property type="method" value="NMR"/>
    <property type="chains" value="A=2-196"/>
</dbReference>
<dbReference type="PDB" id="2UP1">
    <property type="method" value="X-ray"/>
    <property type="resolution" value="2.10 A"/>
    <property type="chains" value="A=8-190"/>
</dbReference>
<dbReference type="PDB" id="4YOE">
    <property type="method" value="X-ray"/>
    <property type="resolution" value="1.92 A"/>
    <property type="chains" value="A=1-196"/>
</dbReference>
<dbReference type="PDB" id="5MPG">
    <property type="method" value="NMR"/>
    <property type="chains" value="A=2-97"/>
</dbReference>
<dbReference type="PDB" id="5MPL">
    <property type="method" value="NMR"/>
    <property type="chains" value="A=95-196"/>
</dbReference>
<dbReference type="PDB" id="5ZGD">
    <property type="method" value="X-ray"/>
    <property type="resolution" value="1.40 A"/>
    <property type="chains" value="A=209-217"/>
</dbReference>
<dbReference type="PDB" id="5ZGL">
    <property type="method" value="X-ray"/>
    <property type="resolution" value="0.95 A"/>
    <property type="chains" value="A/B=234-240"/>
</dbReference>
<dbReference type="PDB" id="6BXX">
    <property type="method" value="X-ray"/>
    <property type="resolution" value="1.10 A"/>
    <property type="chains" value="A=243-248"/>
</dbReference>
<dbReference type="PDB" id="6DCL">
    <property type="method" value="X-ray"/>
    <property type="resolution" value="2.50 A"/>
    <property type="chains" value="A/B=2-188"/>
</dbReference>
<dbReference type="PDB" id="6J60">
    <property type="method" value="EM"/>
    <property type="resolution" value="0.96 A"/>
    <property type="chains" value="A=209-217"/>
</dbReference>
<dbReference type="PDB" id="7BX7">
    <property type="method" value="EM"/>
    <property type="resolution" value="2.80 A"/>
    <property type="chains" value="A/B/C/D/E/F=186-372"/>
</dbReference>
<dbReference type="PDB" id="7ZJ2">
    <property type="method" value="EM"/>
    <property type="resolution" value="3.32 A"/>
    <property type="chains" value="A/B/C/D/E/F/G/H/I/J/K/L=1-372"/>
</dbReference>
<dbReference type="PDB" id="8IK7">
    <property type="method" value="EM"/>
    <property type="resolution" value="3.69 A"/>
    <property type="chains" value="A/B/C/D/E/F/G/H/I/J/K/L/M/N/O/P/Q/R/S/T/U/V/W/X=209-217"/>
</dbReference>
<dbReference type="PDB" id="8IKB">
    <property type="method" value="EM"/>
    <property type="resolution" value="3.71 A"/>
    <property type="chains" value="0/3/D/E/F/I/J/L/M/P/S/T/W/X/Z/a/c/d/e/i/j/m/p/q/s/t/w/x=209-217"/>
</dbReference>
<dbReference type="PDB" id="8IKP">
    <property type="method" value="EM"/>
    <property type="resolution" value="2.98 A"/>
    <property type="chains" value="A/B/C/D/E/F/G/H/I/J/K/L/M/N/O/P/Q/R/S/T/U/V/W/X/Y/Z/a/b/c/d=209-217"/>
</dbReference>
<dbReference type="PDB" id="8IKS">
    <property type="method" value="EM"/>
    <property type="resolution" value="3.75 A"/>
    <property type="chains" value="A/B/C/D/E/F/G/H/I/J/K/L/M/N/O/P=209-217"/>
</dbReference>
<dbReference type="PDB" id="8RZV">
    <property type="method" value="X-ray"/>
    <property type="resolution" value="1.51 A"/>
    <property type="chains" value="A=2-195"/>
</dbReference>
<dbReference type="PDB" id="8X0N">
    <property type="method" value="X-ray"/>
    <property type="resolution" value="2.80 A"/>
    <property type="chains" value="A=1-196"/>
</dbReference>
<dbReference type="PDB" id="9F1S">
    <property type="method" value="X-ray"/>
    <property type="resolution" value="1.50 A"/>
    <property type="chains" value="A=2-195"/>
</dbReference>
<dbReference type="PDB" id="9F4D">
    <property type="method" value="X-ray"/>
    <property type="resolution" value="1.50 A"/>
    <property type="chains" value="A=2-195"/>
</dbReference>
<dbReference type="PDB" id="9F4G">
    <property type="method" value="X-ray"/>
    <property type="resolution" value="1.40 A"/>
    <property type="chains" value="A=2-195"/>
</dbReference>
<dbReference type="PDB" id="9F4H">
    <property type="method" value="X-ray"/>
    <property type="resolution" value="1.40 A"/>
    <property type="chains" value="A=2-195"/>
</dbReference>
<dbReference type="PDB" id="9F4J">
    <property type="method" value="X-ray"/>
    <property type="resolution" value="1.40 A"/>
    <property type="chains" value="A=2-195"/>
</dbReference>
<dbReference type="PDB" id="9F4K">
    <property type="method" value="X-ray"/>
    <property type="resolution" value="1.80 A"/>
    <property type="chains" value="A=2-195"/>
</dbReference>
<dbReference type="PDB" id="9F4L">
    <property type="method" value="X-ray"/>
    <property type="resolution" value="1.40 A"/>
    <property type="chains" value="A=2-195"/>
</dbReference>
<dbReference type="PDB" id="9F4N">
    <property type="method" value="X-ray"/>
    <property type="resolution" value="1.40 A"/>
    <property type="chains" value="A=2-195"/>
</dbReference>
<dbReference type="PDB" id="9F4O">
    <property type="method" value="X-ray"/>
    <property type="resolution" value="1.40 A"/>
    <property type="chains" value="A=2-195"/>
</dbReference>
<dbReference type="PDB" id="9F4P">
    <property type="method" value="X-ray"/>
    <property type="resolution" value="1.40 A"/>
    <property type="chains" value="A=2-195"/>
</dbReference>
<dbReference type="PDB" id="9F4Q">
    <property type="method" value="X-ray"/>
    <property type="resolution" value="1.40 A"/>
    <property type="chains" value="A=2-195"/>
</dbReference>
<dbReference type="PDB" id="9F4R">
    <property type="method" value="X-ray"/>
    <property type="resolution" value="1.59 A"/>
    <property type="chains" value="A=2-195"/>
</dbReference>
<dbReference type="PDB" id="9F4S">
    <property type="method" value="X-ray"/>
    <property type="resolution" value="1.40 A"/>
    <property type="chains" value="A=2-195"/>
</dbReference>
<dbReference type="PDB" id="9F4T">
    <property type="method" value="X-ray"/>
    <property type="resolution" value="1.42 A"/>
    <property type="chains" value="A=2-195"/>
</dbReference>
<dbReference type="PDB" id="9F4U">
    <property type="method" value="X-ray"/>
    <property type="resolution" value="1.40 A"/>
    <property type="chains" value="A=2-195"/>
</dbReference>
<dbReference type="PDB" id="9F4V">
    <property type="method" value="X-ray"/>
    <property type="resolution" value="1.40 A"/>
    <property type="chains" value="A=2-195"/>
</dbReference>
<dbReference type="PDB" id="9F4W">
    <property type="method" value="X-ray"/>
    <property type="resolution" value="1.60 A"/>
    <property type="chains" value="A=2-195"/>
</dbReference>
<dbReference type="PDB" id="9F4X">
    <property type="method" value="X-ray"/>
    <property type="resolution" value="1.60 A"/>
    <property type="chains" value="A=2-195"/>
</dbReference>
<dbReference type="PDB" id="9F4Y">
    <property type="method" value="X-ray"/>
    <property type="resolution" value="1.40 A"/>
    <property type="chains" value="A=2-195"/>
</dbReference>
<dbReference type="PDB" id="9F4Z">
    <property type="method" value="X-ray"/>
    <property type="resolution" value="1.60 A"/>
    <property type="chains" value="A=2-195"/>
</dbReference>
<dbReference type="PDB" id="9F50">
    <property type="method" value="X-ray"/>
    <property type="resolution" value="1.50 A"/>
    <property type="chains" value="A=2-195"/>
</dbReference>
<dbReference type="PDB" id="9F51">
    <property type="method" value="X-ray"/>
    <property type="resolution" value="1.50 A"/>
    <property type="chains" value="A=2-195"/>
</dbReference>
<dbReference type="PDB" id="9F52">
    <property type="method" value="X-ray"/>
    <property type="resolution" value="1.50 A"/>
    <property type="chains" value="A=2-195"/>
</dbReference>
<dbReference type="PDB" id="9F53">
    <property type="method" value="X-ray"/>
    <property type="resolution" value="1.80 A"/>
    <property type="chains" value="A=2-195"/>
</dbReference>
<dbReference type="PDB" id="9F54">
    <property type="method" value="X-ray"/>
    <property type="resolution" value="1.70 A"/>
    <property type="chains" value="A=2-195"/>
</dbReference>
<dbReference type="PDB" id="9F55">
    <property type="method" value="X-ray"/>
    <property type="resolution" value="1.55 A"/>
    <property type="chains" value="A=2-195"/>
</dbReference>
<dbReference type="PDB" id="9F5C">
    <property type="method" value="X-ray"/>
    <property type="resolution" value="1.45 A"/>
    <property type="chains" value="A=2-195"/>
</dbReference>
<dbReference type="PDB" id="9F5D">
    <property type="method" value="X-ray"/>
    <property type="resolution" value="1.60 A"/>
    <property type="chains" value="A=2-195"/>
</dbReference>
<dbReference type="PDB" id="9F5E">
    <property type="method" value="X-ray"/>
    <property type="resolution" value="1.45 A"/>
    <property type="chains" value="A=2-195"/>
</dbReference>
<dbReference type="PDB" id="9F5F">
    <property type="method" value="X-ray"/>
    <property type="resolution" value="1.40 A"/>
    <property type="chains" value="A=2-195"/>
</dbReference>
<dbReference type="PDB" id="9F5G">
    <property type="method" value="X-ray"/>
    <property type="resolution" value="1.80 A"/>
    <property type="chains" value="A=2-195"/>
</dbReference>
<dbReference type="PDB" id="9F5K">
    <property type="method" value="X-ray"/>
    <property type="resolution" value="1.70 A"/>
    <property type="chains" value="A=2-195"/>
</dbReference>
<dbReference type="PDB" id="9F7F">
    <property type="method" value="X-ray"/>
    <property type="resolution" value="1.55 A"/>
    <property type="chains" value="A=2-195"/>
</dbReference>
<dbReference type="PDB" id="9F7H">
    <property type="method" value="X-ray"/>
    <property type="resolution" value="1.43 A"/>
    <property type="chains" value="A=2-195"/>
</dbReference>
<dbReference type="PDB" id="9GEA">
    <property type="method" value="X-ray"/>
    <property type="resolution" value="1.89 A"/>
    <property type="chains" value="A=2-195"/>
</dbReference>
<dbReference type="PDB" id="9GPJ">
    <property type="method" value="X-ray"/>
    <property type="resolution" value="1.53 A"/>
    <property type="chains" value="A=2-195"/>
</dbReference>
<dbReference type="PDB" id="9HQ9">
    <property type="method" value="X-ray"/>
    <property type="resolution" value="1.60 A"/>
    <property type="chains" value="A=2-195"/>
</dbReference>
<dbReference type="PDB" id="9HQJ">
    <property type="method" value="X-ray"/>
    <property type="resolution" value="1.60 A"/>
    <property type="chains" value="A=2-195"/>
</dbReference>
<dbReference type="PDB" id="9HQL">
    <property type="method" value="X-ray"/>
    <property type="resolution" value="1.75 A"/>
    <property type="chains" value="A=2-195"/>
</dbReference>
<dbReference type="PDBsum" id="1HA1"/>
<dbReference type="PDBsum" id="1L3K"/>
<dbReference type="PDBsum" id="1PGZ"/>
<dbReference type="PDBsum" id="1PO6"/>
<dbReference type="PDBsum" id="1U1K"/>
<dbReference type="PDBsum" id="1U1L"/>
<dbReference type="PDBsum" id="1U1M"/>
<dbReference type="PDBsum" id="1U1N"/>
<dbReference type="PDBsum" id="1U1O"/>
<dbReference type="PDBsum" id="1U1P"/>
<dbReference type="PDBsum" id="1U1Q"/>
<dbReference type="PDBsum" id="1U1R"/>
<dbReference type="PDBsum" id="1UP1"/>
<dbReference type="PDBsum" id="2H4M"/>
<dbReference type="PDBsum" id="2LYV"/>
<dbReference type="PDBsum" id="2UP1"/>
<dbReference type="PDBsum" id="4YOE"/>
<dbReference type="PDBsum" id="5MPG"/>
<dbReference type="PDBsum" id="5MPL"/>
<dbReference type="PDBsum" id="5ZGD"/>
<dbReference type="PDBsum" id="5ZGL"/>
<dbReference type="PDBsum" id="6BXX"/>
<dbReference type="PDBsum" id="6DCL"/>
<dbReference type="PDBsum" id="6J60"/>
<dbReference type="PDBsum" id="7BX7"/>
<dbReference type="PDBsum" id="7ZJ2"/>
<dbReference type="PDBsum" id="8IK7"/>
<dbReference type="PDBsum" id="8IKB"/>
<dbReference type="PDBsum" id="8IKP"/>
<dbReference type="PDBsum" id="8IKS"/>
<dbReference type="PDBsum" id="8RZV"/>
<dbReference type="PDBsum" id="8X0N"/>
<dbReference type="PDBsum" id="9F1S"/>
<dbReference type="PDBsum" id="9F4D"/>
<dbReference type="PDBsum" id="9F4G"/>
<dbReference type="PDBsum" id="9F4H"/>
<dbReference type="PDBsum" id="9F4J"/>
<dbReference type="PDBsum" id="9F4K"/>
<dbReference type="PDBsum" id="9F4L"/>
<dbReference type="PDBsum" id="9F4N"/>
<dbReference type="PDBsum" id="9F4O"/>
<dbReference type="PDBsum" id="9F4P"/>
<dbReference type="PDBsum" id="9F4Q"/>
<dbReference type="PDBsum" id="9F4R"/>
<dbReference type="PDBsum" id="9F4S"/>
<dbReference type="PDBsum" id="9F4T"/>
<dbReference type="PDBsum" id="9F4U"/>
<dbReference type="PDBsum" id="9F4V"/>
<dbReference type="PDBsum" id="9F4W"/>
<dbReference type="PDBsum" id="9F4X"/>
<dbReference type="PDBsum" id="9F4Y"/>
<dbReference type="PDBsum" id="9F4Z"/>
<dbReference type="PDBsum" id="9F50"/>
<dbReference type="PDBsum" id="9F51"/>
<dbReference type="PDBsum" id="9F52"/>
<dbReference type="PDBsum" id="9F53"/>
<dbReference type="PDBsum" id="9F54"/>
<dbReference type="PDBsum" id="9F55"/>
<dbReference type="PDBsum" id="9F5C"/>
<dbReference type="PDBsum" id="9F5D"/>
<dbReference type="PDBsum" id="9F5E"/>
<dbReference type="PDBsum" id="9F5F"/>
<dbReference type="PDBsum" id="9F5G"/>
<dbReference type="PDBsum" id="9F5K"/>
<dbReference type="PDBsum" id="9F7F"/>
<dbReference type="PDBsum" id="9F7H"/>
<dbReference type="PDBsum" id="9GEA"/>
<dbReference type="PDBsum" id="9GPJ"/>
<dbReference type="PDBsum" id="9HQ9"/>
<dbReference type="PDBsum" id="9HQJ"/>
<dbReference type="PDBsum" id="9HQL"/>
<dbReference type="BMRB" id="P09651"/>
<dbReference type="EMDB" id="EMD-14739"/>
<dbReference type="EMDB" id="EMD-30235"/>
<dbReference type="SASBDB" id="P09651"/>
<dbReference type="SMR" id="P09651"/>
<dbReference type="BioGRID" id="109420">
    <property type="interactions" value="975"/>
</dbReference>
<dbReference type="CORUM" id="P09651"/>
<dbReference type="DIP" id="DIP-29338N"/>
<dbReference type="FunCoup" id="P09651">
    <property type="interactions" value="2739"/>
</dbReference>
<dbReference type="IntAct" id="P09651">
    <property type="interactions" value="585"/>
</dbReference>
<dbReference type="MINT" id="P09651"/>
<dbReference type="STRING" id="9606.ENSP00000341826"/>
<dbReference type="BindingDB" id="P09651"/>
<dbReference type="ChEMBL" id="CHEMBL1955709"/>
<dbReference type="GlyCosmos" id="P09651">
    <property type="glycosylation" value="5 sites, 1 glycan"/>
</dbReference>
<dbReference type="GlyGen" id="P09651">
    <property type="glycosylation" value="10 sites, 1 N-linked glycan (1 site), 1 O-linked glycan (9 sites)"/>
</dbReference>
<dbReference type="iPTMnet" id="P09651"/>
<dbReference type="MetOSite" id="P09651"/>
<dbReference type="PhosphoSitePlus" id="P09651"/>
<dbReference type="SwissPalm" id="P09651"/>
<dbReference type="BioMuta" id="HNRNPA1"/>
<dbReference type="DMDM" id="288558857"/>
<dbReference type="jPOST" id="P09651"/>
<dbReference type="MassIVE" id="P09651"/>
<dbReference type="PaxDb" id="9606-ENSP00000341826"/>
<dbReference type="PeptideAtlas" id="P09651"/>
<dbReference type="PRIDE" id="P09651"/>
<dbReference type="ProteomicsDB" id="52258">
    <molecule id="P09651-1"/>
</dbReference>
<dbReference type="ProteomicsDB" id="52259">
    <molecule id="P09651-2"/>
</dbReference>
<dbReference type="ProteomicsDB" id="52260">
    <molecule id="P09651-3"/>
</dbReference>
<dbReference type="Pumba" id="P09651"/>
<dbReference type="TopDownProteomics" id="P09651-1">
    <molecule id="P09651-1"/>
</dbReference>
<dbReference type="TopDownProteomics" id="P09651-2">
    <molecule id="P09651-2"/>
</dbReference>
<dbReference type="TopDownProteomics" id="P09651-3">
    <molecule id="P09651-3"/>
</dbReference>
<dbReference type="Antibodypedia" id="7969">
    <property type="antibodies" value="512 antibodies from 39 providers"/>
</dbReference>
<dbReference type="DNASU" id="3178"/>
<dbReference type="Ensembl" id="ENST00000340913.11">
    <molecule id="P09651-1"/>
    <property type="protein sequence ID" value="ENSP00000341826.7"/>
    <property type="gene ID" value="ENSG00000135486.19"/>
</dbReference>
<dbReference type="Ensembl" id="ENST00000546500.5">
    <molecule id="P09651-2"/>
    <property type="protein sequence ID" value="ENSP00000448617.1"/>
    <property type="gene ID" value="ENSG00000135486.19"/>
</dbReference>
<dbReference type="Ensembl" id="ENST00000547276.5">
    <molecule id="P09651-3"/>
    <property type="protein sequence ID" value="ENSP00000447260.1"/>
    <property type="gene ID" value="ENSG00000135486.19"/>
</dbReference>
<dbReference type="Ensembl" id="ENST00000547566.5">
    <molecule id="P09651-2"/>
    <property type="protein sequence ID" value="ENSP00000449913.1"/>
    <property type="gene ID" value="ENSG00000135486.19"/>
</dbReference>
<dbReference type="Ensembl" id="ENST00000550482.2">
    <molecule id="P09651-2"/>
    <property type="protein sequence ID" value="ENSP00000446486.2"/>
    <property type="gene ID" value="ENSG00000135486.19"/>
</dbReference>
<dbReference type="Ensembl" id="ENST00000677210.1">
    <molecule id="P09651-1"/>
    <property type="protein sequence ID" value="ENSP00000503610.1"/>
    <property type="gene ID" value="ENSG00000135486.19"/>
</dbReference>
<dbReference type="GeneID" id="3178"/>
<dbReference type="KEGG" id="hsa:3178"/>
<dbReference type="MANE-Select" id="ENST00000340913.11">
    <property type="protein sequence ID" value="ENSP00000341826.7"/>
    <property type="RefSeq nucleotide sequence ID" value="NM_031157.4"/>
    <property type="RefSeq protein sequence ID" value="NP_112420.1"/>
</dbReference>
<dbReference type="UCSC" id="uc001sfl.4">
    <molecule id="P09651-1"/>
    <property type="organism name" value="human"/>
</dbReference>
<dbReference type="AGR" id="HGNC:5031"/>
<dbReference type="CTD" id="3178"/>
<dbReference type="DisGeNET" id="3178"/>
<dbReference type="GeneCards" id="HNRNPA1"/>
<dbReference type="GeneReviews" id="HNRNPA1"/>
<dbReference type="HGNC" id="HGNC:5031">
    <property type="gene designation" value="HNRNPA1"/>
</dbReference>
<dbReference type="HPA" id="ENSG00000135486">
    <property type="expression patterns" value="Low tissue specificity"/>
</dbReference>
<dbReference type="MalaCards" id="HNRNPA1"/>
<dbReference type="MIM" id="164017">
    <property type="type" value="gene"/>
</dbReference>
<dbReference type="MIM" id="610099">
    <property type="type" value="phenotype"/>
</dbReference>
<dbReference type="MIM" id="615424">
    <property type="type" value="phenotype"/>
</dbReference>
<dbReference type="MIM" id="615426">
    <property type="type" value="phenotype"/>
</dbReference>
<dbReference type="neXtProt" id="NX_P09651"/>
<dbReference type="OpenTargets" id="ENSG00000135486"/>
<dbReference type="Orphanet" id="803">
    <property type="disease" value="Amyotrophic lateral sclerosis"/>
</dbReference>
<dbReference type="Orphanet" id="52430">
    <property type="disease" value="Inclusion body myopathy with Paget disease of bone and frontotemporal dementia"/>
</dbReference>
<dbReference type="PharmGKB" id="PA162391113"/>
<dbReference type="VEuPathDB" id="HostDB:ENSG00000135486"/>
<dbReference type="eggNOG" id="KOG0118">
    <property type="taxonomic scope" value="Eukaryota"/>
</dbReference>
<dbReference type="GeneTree" id="ENSGT00950000183123"/>
<dbReference type="HOGENOM" id="CLU_012062_1_0_1"/>
<dbReference type="InParanoid" id="P09651"/>
<dbReference type="OMA" id="RSYHDDF"/>
<dbReference type="OrthoDB" id="6019873at2759"/>
<dbReference type="PAN-GO" id="P09651">
    <property type="GO annotations" value="3 GO annotations based on evolutionary models"/>
</dbReference>
<dbReference type="PhylomeDB" id="P09651"/>
<dbReference type="TreeFam" id="TF314808"/>
<dbReference type="PathwayCommons" id="P09651"/>
<dbReference type="Reactome" id="R-HSA-6803529">
    <property type="pathway name" value="FGFR2 alternative splicing"/>
</dbReference>
<dbReference type="Reactome" id="R-HSA-72163">
    <property type="pathway name" value="mRNA Splicing - Major Pathway"/>
</dbReference>
<dbReference type="Reactome" id="R-HSA-72203">
    <property type="pathway name" value="Processing of Capped Intron-Containing Pre-mRNA"/>
</dbReference>
<dbReference type="Reactome" id="R-HSA-9692914">
    <property type="pathway name" value="SARS-CoV-1-host interactions"/>
</dbReference>
<dbReference type="Reactome" id="R-HSA-9735869">
    <property type="pathway name" value="SARS-CoV-1 modulates host translation machinery"/>
</dbReference>
<dbReference type="SignaLink" id="P09651"/>
<dbReference type="SIGNOR" id="P09651"/>
<dbReference type="BioGRID-ORCS" id="3178">
    <property type="hits" value="126 hits in 1098 CRISPR screens"/>
</dbReference>
<dbReference type="CD-CODE" id="1A18FFC4">
    <property type="entry name" value="Paraspeckle"/>
</dbReference>
<dbReference type="CD-CODE" id="2CE6B729">
    <property type="entry name" value="Synthetic Condensate 000295"/>
</dbReference>
<dbReference type="CD-CODE" id="318A8771">
    <property type="entry name" value="Synthetic Condensate 000319"/>
</dbReference>
<dbReference type="CD-CODE" id="462A97B5">
    <property type="entry name" value="Leucocyte nuclear body"/>
</dbReference>
<dbReference type="CD-CODE" id="6209F224">
    <property type="entry name" value="Synthetic Condensate 000281"/>
</dbReference>
<dbReference type="CD-CODE" id="62EA6512">
    <property type="entry name" value="Sam68 nuclear body"/>
</dbReference>
<dbReference type="CD-CODE" id="804901D1">
    <property type="entry name" value="Nuclear speckle"/>
</dbReference>
<dbReference type="CD-CODE" id="89D22CC2">
    <property type="entry name" value="Synthetic Condensate 000270"/>
</dbReference>
<dbReference type="CD-CODE" id="91857CE7">
    <property type="entry name" value="Nucleolus"/>
</dbReference>
<dbReference type="CD-CODE" id="A3F53DF0">
    <property type="entry name" value="Synthetic Condensate 000272"/>
</dbReference>
<dbReference type="CD-CODE" id="DEE660B4">
    <property type="entry name" value="Stress granule"/>
</dbReference>
<dbReference type="CD-CODE" id="F85A2E29">
    <property type="entry name" value="IMP1 RNP granule"/>
</dbReference>
<dbReference type="CD-CODE" id="FB4E32DD">
    <property type="entry name" value="Presynaptic clusters and postsynaptic densities"/>
</dbReference>
<dbReference type="ChiTaRS" id="HNRNPA1">
    <property type="organism name" value="human"/>
</dbReference>
<dbReference type="EvolutionaryTrace" id="P09651"/>
<dbReference type="GeneWiki" id="Heterogeneous_nuclear_ribonucleoprotein_A1"/>
<dbReference type="GenomeRNAi" id="3178"/>
<dbReference type="Pharos" id="P09651">
    <property type="development level" value="Tchem"/>
</dbReference>
<dbReference type="PRO" id="PR:P09651"/>
<dbReference type="Proteomes" id="UP000005640">
    <property type="component" value="Chromosome 12"/>
</dbReference>
<dbReference type="RNAct" id="P09651">
    <property type="molecule type" value="protein"/>
</dbReference>
<dbReference type="Bgee" id="ENSG00000135486">
    <property type="expression patterns" value="Expressed in ganglionic eminence and 204 other cell types or tissues"/>
</dbReference>
<dbReference type="ExpressionAtlas" id="P09651">
    <property type="expression patterns" value="baseline and differential"/>
</dbReference>
<dbReference type="GO" id="GO:0071013">
    <property type="term" value="C:catalytic step 2 spliceosome"/>
    <property type="evidence" value="ECO:0000314"/>
    <property type="project" value="UniProtKB"/>
</dbReference>
<dbReference type="GO" id="GO:0005737">
    <property type="term" value="C:cytoplasm"/>
    <property type="evidence" value="ECO:0000314"/>
    <property type="project" value="HGNC-UCL"/>
</dbReference>
<dbReference type="GO" id="GO:0005829">
    <property type="term" value="C:cytosol"/>
    <property type="evidence" value="ECO:0000304"/>
    <property type="project" value="Reactome"/>
</dbReference>
<dbReference type="GO" id="GO:0070062">
    <property type="term" value="C:extracellular exosome"/>
    <property type="evidence" value="ECO:0007005"/>
    <property type="project" value="UniProtKB"/>
</dbReference>
<dbReference type="GO" id="GO:0016020">
    <property type="term" value="C:membrane"/>
    <property type="evidence" value="ECO:0007005"/>
    <property type="project" value="UniProtKB"/>
</dbReference>
<dbReference type="GO" id="GO:0005654">
    <property type="term" value="C:nucleoplasm"/>
    <property type="evidence" value="ECO:0000314"/>
    <property type="project" value="HPA"/>
</dbReference>
<dbReference type="GO" id="GO:0005634">
    <property type="term" value="C:nucleus"/>
    <property type="evidence" value="ECO:0000314"/>
    <property type="project" value="UniProtKB"/>
</dbReference>
<dbReference type="GO" id="GO:1990904">
    <property type="term" value="C:ribonucleoprotein complex"/>
    <property type="evidence" value="ECO:0000314"/>
    <property type="project" value="UniProtKB"/>
</dbReference>
<dbReference type="GO" id="GO:0005681">
    <property type="term" value="C:spliceosomal complex"/>
    <property type="evidence" value="ECO:0000314"/>
    <property type="project" value="CAFA"/>
</dbReference>
<dbReference type="GO" id="GO:0045202">
    <property type="term" value="C:synapse"/>
    <property type="evidence" value="ECO:0007669"/>
    <property type="project" value="Ensembl"/>
</dbReference>
<dbReference type="GO" id="GO:0003677">
    <property type="term" value="F:DNA binding"/>
    <property type="evidence" value="ECO:0000269"/>
    <property type="project" value="DisProt"/>
</dbReference>
<dbReference type="GO" id="GO:0098505">
    <property type="term" value="F:G-rich strand telomeric DNA binding"/>
    <property type="evidence" value="ECO:0000314"/>
    <property type="project" value="BHF-UCL"/>
</dbReference>
<dbReference type="GO" id="GO:0042802">
    <property type="term" value="F:identical protein binding"/>
    <property type="evidence" value="ECO:0000353"/>
    <property type="project" value="IntAct"/>
</dbReference>
<dbReference type="GO" id="GO:0035198">
    <property type="term" value="F:miRNA binding"/>
    <property type="evidence" value="ECO:0000314"/>
    <property type="project" value="UniProtKB"/>
</dbReference>
<dbReference type="GO" id="GO:0036002">
    <property type="term" value="F:pre-mRNA binding"/>
    <property type="evidence" value="ECO:0000314"/>
    <property type="project" value="UniProtKB"/>
</dbReference>
<dbReference type="GO" id="GO:0019904">
    <property type="term" value="F:protein domain specific binding"/>
    <property type="evidence" value="ECO:0000353"/>
    <property type="project" value="UniProtKB"/>
</dbReference>
<dbReference type="GO" id="GO:0003723">
    <property type="term" value="F:RNA binding"/>
    <property type="evidence" value="ECO:0007005"/>
    <property type="project" value="UniProtKB"/>
</dbReference>
<dbReference type="GO" id="GO:0003697">
    <property type="term" value="F:single-stranded DNA binding"/>
    <property type="evidence" value="ECO:0000314"/>
    <property type="project" value="HGNC-UCL"/>
</dbReference>
<dbReference type="GO" id="GO:0003727">
    <property type="term" value="F:single-stranded RNA binding"/>
    <property type="evidence" value="ECO:0000305"/>
    <property type="project" value="HGNC-UCL"/>
</dbReference>
<dbReference type="GO" id="GO:0061752">
    <property type="term" value="F:telomeric repeat-containing RNA binding"/>
    <property type="evidence" value="ECO:0000314"/>
    <property type="project" value="BHF-UCL"/>
</dbReference>
<dbReference type="GO" id="GO:0000380">
    <property type="term" value="P:alternative mRNA splicing, via spliceosome"/>
    <property type="evidence" value="ECO:0007669"/>
    <property type="project" value="Ensembl"/>
</dbReference>
<dbReference type="GO" id="GO:0042149">
    <property type="term" value="P:cellular response to glucose starvation"/>
    <property type="evidence" value="ECO:0000315"/>
    <property type="project" value="CAFA"/>
</dbReference>
<dbReference type="GO" id="GO:1903936">
    <property type="term" value="P:cellular response to sodium arsenite"/>
    <property type="evidence" value="ECO:0000314"/>
    <property type="project" value="UniProtKB"/>
</dbReference>
<dbReference type="GO" id="GO:0051170">
    <property type="term" value="P:import into nucleus"/>
    <property type="evidence" value="ECO:0000314"/>
    <property type="project" value="HGNC-UCL"/>
</dbReference>
<dbReference type="GO" id="GO:0000398">
    <property type="term" value="P:mRNA splicing, via spliceosome"/>
    <property type="evidence" value="ECO:0000318"/>
    <property type="project" value="GO_Central"/>
</dbReference>
<dbReference type="GO" id="GO:0051028">
    <property type="term" value="P:mRNA transport"/>
    <property type="evidence" value="ECO:0007669"/>
    <property type="project" value="UniProtKB-KW"/>
</dbReference>
<dbReference type="GO" id="GO:0032211">
    <property type="term" value="P:negative regulation of telomere maintenance via telomerase"/>
    <property type="evidence" value="ECO:0000315"/>
    <property type="project" value="BHF-UCL"/>
</dbReference>
<dbReference type="GO" id="GO:0051168">
    <property type="term" value="P:nuclear export"/>
    <property type="evidence" value="ECO:0000314"/>
    <property type="project" value="HGNC-UCL"/>
</dbReference>
<dbReference type="GO" id="GO:0032212">
    <property type="term" value="P:positive regulation of telomere maintenance via telomerase"/>
    <property type="evidence" value="ECO:0000314"/>
    <property type="project" value="BHF-UCL"/>
</dbReference>
<dbReference type="GO" id="GO:0000381">
    <property type="term" value="P:regulation of alternative mRNA splicing, via spliceosome"/>
    <property type="evidence" value="ECO:0000315"/>
    <property type="project" value="CAFA"/>
</dbReference>
<dbReference type="GO" id="GO:0043484">
    <property type="term" value="P:regulation of RNA splicing"/>
    <property type="evidence" value="ECO:0000314"/>
    <property type="project" value="UniProtKB"/>
</dbReference>
<dbReference type="GO" id="GO:0006405">
    <property type="term" value="P:RNA export from nucleus"/>
    <property type="evidence" value="ECO:0000305"/>
    <property type="project" value="HGNC-UCL"/>
</dbReference>
<dbReference type="CDD" id="cd12761">
    <property type="entry name" value="RRM1_hnRNPA1"/>
    <property type="match status" value="1"/>
</dbReference>
<dbReference type="CDD" id="cd12582">
    <property type="entry name" value="RRM2_hnRNPA3"/>
    <property type="match status" value="1"/>
</dbReference>
<dbReference type="DisProt" id="DP00324"/>
<dbReference type="FunFam" id="3.30.70.330:FF:000048">
    <property type="entry name" value="Heterogeneous nuclear ribonucleoprotein a1 isoform"/>
    <property type="match status" value="1"/>
</dbReference>
<dbReference type="FunFam" id="3.30.70.330:FF:000429">
    <property type="entry name" value="Heterogeneous nuclear ribonucleoprotein A1-like 2"/>
    <property type="match status" value="1"/>
</dbReference>
<dbReference type="Gene3D" id="3.30.70.330">
    <property type="match status" value="2"/>
</dbReference>
<dbReference type="IDEAL" id="IID00119"/>
<dbReference type="InterPro" id="IPR034516">
    <property type="entry name" value="hnRNPA1/3_RRM2"/>
</dbReference>
<dbReference type="InterPro" id="IPR021662">
    <property type="entry name" value="HnRNPA1/A2_C"/>
</dbReference>
<dbReference type="InterPro" id="IPR034845">
    <property type="entry name" value="hnRNPA1_RRM1"/>
</dbReference>
<dbReference type="InterPro" id="IPR012677">
    <property type="entry name" value="Nucleotide-bd_a/b_plait_sf"/>
</dbReference>
<dbReference type="InterPro" id="IPR035979">
    <property type="entry name" value="RBD_domain_sf"/>
</dbReference>
<dbReference type="InterPro" id="IPR000504">
    <property type="entry name" value="RRM_dom"/>
</dbReference>
<dbReference type="PANTHER" id="PTHR48026:SF2">
    <property type="entry name" value="HETEROGENEOUS NUCLEAR RIBONUCLEOPROTEIN A1-RELATED"/>
    <property type="match status" value="1"/>
</dbReference>
<dbReference type="PANTHER" id="PTHR48026">
    <property type="entry name" value="HOMOLOGOUS TO DROSOPHILA SQD (SQUID) PROTEIN"/>
    <property type="match status" value="1"/>
</dbReference>
<dbReference type="Pfam" id="PF11627">
    <property type="entry name" value="HnRNPA1_LC"/>
    <property type="match status" value="1"/>
</dbReference>
<dbReference type="Pfam" id="PF00076">
    <property type="entry name" value="RRM_1"/>
    <property type="match status" value="2"/>
</dbReference>
<dbReference type="SMART" id="SM00360">
    <property type="entry name" value="RRM"/>
    <property type="match status" value="2"/>
</dbReference>
<dbReference type="SUPFAM" id="SSF54928">
    <property type="entry name" value="RNA-binding domain, RBD"/>
    <property type="match status" value="2"/>
</dbReference>
<dbReference type="PROSITE" id="PS50102">
    <property type="entry name" value="RRM"/>
    <property type="match status" value="2"/>
</dbReference>
<gene>
    <name type="primary">HNRNPA1</name>
    <name type="synonym">HNRPA1</name>
</gene>
<accession>P09651</accession>
<accession>A8K4Z8</accession>
<accession>Q3MIB7</accession>
<accession>Q6PJZ7</accession>
<organism>
    <name type="scientific">Homo sapiens</name>
    <name type="common">Human</name>
    <dbReference type="NCBI Taxonomy" id="9606"/>
    <lineage>
        <taxon>Eukaryota</taxon>
        <taxon>Metazoa</taxon>
        <taxon>Chordata</taxon>
        <taxon>Craniata</taxon>
        <taxon>Vertebrata</taxon>
        <taxon>Euteleostomi</taxon>
        <taxon>Mammalia</taxon>
        <taxon>Eutheria</taxon>
        <taxon>Euarchontoglires</taxon>
        <taxon>Primates</taxon>
        <taxon>Haplorrhini</taxon>
        <taxon>Catarrhini</taxon>
        <taxon>Hominidae</taxon>
        <taxon>Homo</taxon>
    </lineage>
</organism>
<evidence type="ECO:0000250" key="1">
    <source>
        <dbReference type="UniProtKB" id="P04256"/>
    </source>
</evidence>
<evidence type="ECO:0000250" key="2">
    <source>
        <dbReference type="UniProtKB" id="P09867"/>
    </source>
</evidence>
<evidence type="ECO:0000250" key="3">
    <source>
        <dbReference type="UniProtKB" id="P49312"/>
    </source>
</evidence>
<evidence type="ECO:0000255" key="4">
    <source>
        <dbReference type="PROSITE-ProRule" id="PRU00176"/>
    </source>
</evidence>
<evidence type="ECO:0000256" key="5">
    <source>
        <dbReference type="SAM" id="MobiDB-lite"/>
    </source>
</evidence>
<evidence type="ECO:0000269" key="6">
    <source>
    </source>
</evidence>
<evidence type="ECO:0000269" key="7">
    <source>
    </source>
</evidence>
<evidence type="ECO:0000269" key="8">
    <source>
    </source>
</evidence>
<evidence type="ECO:0000269" key="9">
    <source>
    </source>
</evidence>
<evidence type="ECO:0000269" key="10">
    <source>
    </source>
</evidence>
<evidence type="ECO:0000269" key="11">
    <source>
    </source>
</evidence>
<evidence type="ECO:0000269" key="12">
    <source>
    </source>
</evidence>
<evidence type="ECO:0000269" key="13">
    <source>
    </source>
</evidence>
<evidence type="ECO:0000269" key="14">
    <source>
    </source>
</evidence>
<evidence type="ECO:0000269" key="15">
    <source>
    </source>
</evidence>
<evidence type="ECO:0000269" key="16">
    <source>
    </source>
</evidence>
<evidence type="ECO:0000269" key="17">
    <source>
    </source>
</evidence>
<evidence type="ECO:0000269" key="18">
    <source>
    </source>
</evidence>
<evidence type="ECO:0000269" key="19">
    <source>
    </source>
</evidence>
<evidence type="ECO:0000269" key="20">
    <source>
    </source>
</evidence>
<evidence type="ECO:0000269" key="21">
    <source>
    </source>
</evidence>
<evidence type="ECO:0000269" key="22">
    <source>
    </source>
</evidence>
<evidence type="ECO:0000269" key="23">
    <source>
    </source>
</evidence>
<evidence type="ECO:0000269" key="24">
    <source ref="9"/>
</evidence>
<evidence type="ECO:0000303" key="25">
    <source>
    </source>
</evidence>
<evidence type="ECO:0000303" key="26">
    <source>
    </source>
</evidence>
<evidence type="ECO:0000303" key="27">
    <source>
    </source>
</evidence>
<evidence type="ECO:0000303" key="28">
    <source ref="3"/>
</evidence>
<evidence type="ECO:0000305" key="29"/>
<evidence type="ECO:0000305" key="30">
    <source>
    </source>
</evidence>
<evidence type="ECO:0007744" key="31">
    <source>
    </source>
</evidence>
<evidence type="ECO:0007744" key="32">
    <source>
    </source>
</evidence>
<evidence type="ECO:0007744" key="33">
    <source>
    </source>
</evidence>
<evidence type="ECO:0007744" key="34">
    <source>
    </source>
</evidence>
<evidence type="ECO:0007744" key="35">
    <source>
    </source>
</evidence>
<evidence type="ECO:0007744" key="36">
    <source>
    </source>
</evidence>
<evidence type="ECO:0007744" key="37">
    <source>
    </source>
</evidence>
<evidence type="ECO:0007744" key="38">
    <source>
    </source>
</evidence>
<evidence type="ECO:0007744" key="39">
    <source>
    </source>
</evidence>
<evidence type="ECO:0007744" key="40">
    <source>
    </source>
</evidence>
<evidence type="ECO:0007829" key="41">
    <source>
        <dbReference type="PDB" id="1L3K"/>
    </source>
</evidence>
<evidence type="ECO:0007829" key="42">
    <source>
        <dbReference type="PDB" id="1U1Q"/>
    </source>
</evidence>
<evidence type="ECO:0007829" key="43">
    <source>
        <dbReference type="PDB" id="1U1R"/>
    </source>
</evidence>
<evidence type="ECO:0007829" key="44">
    <source>
        <dbReference type="PDB" id="7BX7"/>
    </source>
</evidence>
<evidence type="ECO:0007829" key="45">
    <source>
        <dbReference type="PDB" id="9F5E"/>
    </source>
</evidence>